<accession>Q92887</accession>
<accession>B2RMT8</accession>
<accession>Q14022</accession>
<accession>Q5T2B1</accession>
<accession>Q92500</accession>
<accession>Q92798</accession>
<accession>Q99663</accession>
<accession>Q9UMS2</accession>
<gene>
    <name evidence="31" type="primary">ABCC2</name>
    <name type="synonym">CMOAT</name>
    <name type="synonym">CMOAT1</name>
    <name evidence="26" type="synonym">CMRP</name>
    <name type="synonym">MRP2</name>
</gene>
<comment type="function">
    <text evidence="8 9 14 15 17">ATP-dependent transporter of the ATP-binding cassette (ABC) family that binds and hydrolyzes ATP to enable active transport of various substrates including many drugs, toxicants and endogenous compound across cell membranes. Transports a wide variety of conjugated organic anions such as sulfate-, glucuronide- and glutathione (GSH)-conjugates of endo- and xenobiotics substrates (PubMed:10220572, PubMed:10421658, PubMed:11500505, PubMed:16332456). Mediates hepatobiliary excretion of mono- and bis-glucuronidated bilirubin molecules and therefore play an important role in bilirubin detoxification (PubMed:10421658). Also mediates hepatobiliary excretion of others glucuronide conjugates such as 17beta-estradiol 17-glucosiduronic acid and leukotriene C4 (PubMed:11500505). Transports sulfated bile salt such as taurolithocholate sulfate (PubMed:16332456). Transports various anticancer drugs, such as anthracycline, vinca alkaloid and methotrexate and HIV-drugs such as protease inhibitors (PubMed:10220572, PubMed:11500505, PubMed:12441801). Confers resistance to several anti-cancer drugs including cisplatin, doxorubicin, epirubicin, methotrexate, etoposide and vincristine (PubMed:10220572, PubMed:11500505).</text>
</comment>
<comment type="catalytic activity">
    <reaction evidence="8 14 15">
        <text>ATP + H2O + xenobioticSide 1 = ADP + phosphate + xenobioticSide 2.</text>
        <dbReference type="EC" id="7.6.2.2"/>
    </reaction>
</comment>
<comment type="catalytic activity">
    <reaction evidence="8 14">
        <text>an S-substituted glutathione(in) + ATP + H2O = an S-substituted glutathione(out) + ADP + phosphate + H(+)</text>
        <dbReference type="Rhea" id="RHEA:19121"/>
        <dbReference type="ChEBI" id="CHEBI:15377"/>
        <dbReference type="ChEBI" id="CHEBI:15378"/>
        <dbReference type="ChEBI" id="CHEBI:30616"/>
        <dbReference type="ChEBI" id="CHEBI:43474"/>
        <dbReference type="ChEBI" id="CHEBI:90779"/>
        <dbReference type="ChEBI" id="CHEBI:456216"/>
        <dbReference type="EC" id="7.6.2.3"/>
    </reaction>
    <physiologicalReaction direction="left-to-right" evidence="28 30">
        <dbReference type="Rhea" id="RHEA:19122"/>
    </physiologicalReaction>
</comment>
<comment type="catalytic activity">
    <reaction evidence="17">
        <text>taurolithocholate 3-sulfate(in) + ATP + H2O = taurolithocholate 3-sulfate(out) + ADP + phosphate + H(+)</text>
        <dbReference type="Rhea" id="RHEA:50084"/>
        <dbReference type="ChEBI" id="CHEBI:15377"/>
        <dbReference type="ChEBI" id="CHEBI:15378"/>
        <dbReference type="ChEBI" id="CHEBI:30616"/>
        <dbReference type="ChEBI" id="CHEBI:43474"/>
        <dbReference type="ChEBI" id="CHEBI:58301"/>
        <dbReference type="ChEBI" id="CHEBI:456216"/>
    </reaction>
    <physiologicalReaction direction="left-to-right" evidence="17">
        <dbReference type="Rhea" id="RHEA:50085"/>
    </physiologicalReaction>
</comment>
<comment type="catalytic activity">
    <reaction evidence="8 14">
        <text>leukotriene C4(in) + ATP + H2O = leukotriene C4(out) + ADP + phosphate + H(+)</text>
        <dbReference type="Rhea" id="RHEA:38963"/>
        <dbReference type="ChEBI" id="CHEBI:15377"/>
        <dbReference type="ChEBI" id="CHEBI:15378"/>
        <dbReference type="ChEBI" id="CHEBI:30616"/>
        <dbReference type="ChEBI" id="CHEBI:43474"/>
        <dbReference type="ChEBI" id="CHEBI:57973"/>
        <dbReference type="ChEBI" id="CHEBI:456216"/>
    </reaction>
    <physiologicalReaction direction="left-to-right" evidence="30">
        <dbReference type="Rhea" id="RHEA:38964"/>
    </physiologicalReaction>
</comment>
<comment type="catalytic activity">
    <reaction evidence="8 14">
        <text>17beta-estradiol 17-O-(beta-D-glucuronate)(in) + ATP + H2O = 17beta-estradiol 17-O-(beta-D-glucuronate)(out) + ADP + phosphate + H(+)</text>
        <dbReference type="Rhea" id="RHEA:60128"/>
        <dbReference type="ChEBI" id="CHEBI:15377"/>
        <dbReference type="ChEBI" id="CHEBI:15378"/>
        <dbReference type="ChEBI" id="CHEBI:30616"/>
        <dbReference type="ChEBI" id="CHEBI:43474"/>
        <dbReference type="ChEBI" id="CHEBI:82961"/>
        <dbReference type="ChEBI" id="CHEBI:456216"/>
    </reaction>
    <physiologicalReaction direction="left-to-right" evidence="30">
        <dbReference type="Rhea" id="RHEA:60129"/>
    </physiologicalReaction>
</comment>
<comment type="catalytic activity">
    <reaction evidence="9">
        <text>(4Z,15Z)-bilirubin IXalpha C8-beta-D-glucuronoside(in) + ATP + H2O = (4Z,15Z)-bilirubin IXalpha C8-beta-D-glucuronoside(out) + ADP + phosphate + H(+)</text>
        <dbReference type="Rhea" id="RHEA:66180"/>
        <dbReference type="ChEBI" id="CHEBI:15377"/>
        <dbReference type="ChEBI" id="CHEBI:15378"/>
        <dbReference type="ChEBI" id="CHEBI:30616"/>
        <dbReference type="ChEBI" id="CHEBI:43474"/>
        <dbReference type="ChEBI" id="CHEBI:229704"/>
        <dbReference type="ChEBI" id="CHEBI:456216"/>
    </reaction>
    <physiologicalReaction direction="left-to-right" evidence="29">
        <dbReference type="Rhea" id="RHEA:66181"/>
    </physiologicalReaction>
</comment>
<comment type="catalytic activity">
    <reaction evidence="29">
        <text>(4Z,15Z)-bilirubin IXalpha C8,C12-beta-D-bisglucuronoside(in) + ATP + H2O = (4Z,15Z)-bilirubin IXalpha C8,C12-beta-D-bisglucuronoside(out) + ADP + phosphate + H(+)</text>
        <dbReference type="Rhea" id="RHEA:66192"/>
        <dbReference type="ChEBI" id="CHEBI:15377"/>
        <dbReference type="ChEBI" id="CHEBI:15378"/>
        <dbReference type="ChEBI" id="CHEBI:30616"/>
        <dbReference type="ChEBI" id="CHEBI:43474"/>
        <dbReference type="ChEBI" id="CHEBI:229706"/>
        <dbReference type="ChEBI" id="CHEBI:456216"/>
    </reaction>
</comment>
<comment type="biophysicochemical properties">
    <kinetics>
        <KM evidence="8">7.2 uM for 17beta-estradiol 17-O-(beta-D-glucuronate)</KM>
        <KM evidence="8">1 uM for leukotriene C4</KM>
        <KM evidence="9">0.7 uM for bilirubin-glucuronoside</KM>
        <KM evidence="9">0.9 uM for bilirubin-bisglucuronoside</KM>
        <KM evidence="17">8.2 uM for taurolithocholate sulfate</KM>
        <Vmax evidence="9">321.0 pmol/min/mg enzyme for bilirubin-glucuronoside transport</Vmax>
        <Vmax evidence="9">255.0 pmol/min/mg enzyme bilirubin-bisglucuronoside transport</Vmax>
        <Vmax evidence="17">1530.0 pmol/min/mg enzyme for taurolithocholate sulfate transport</Vmax>
    </kinetics>
</comment>
<comment type="interaction">
    <interactant intactId="EBI-3916193">
        <id>Q92887</id>
    </interactant>
    <interactant intactId="EBI-300010">
        <id>P19838</id>
        <label>NFKB1</label>
    </interactant>
    <organismsDiffer>false</organismsDiffer>
    <experiments>3</experiments>
</comment>
<comment type="subcellular location">
    <subcellularLocation>
        <location evidence="8 11 20">Apical cell membrane</location>
        <topology evidence="3">Multi-pass membrane protein</topology>
    </subcellularLocation>
    <text evidence="20">Localized to the apical membrane of enterocytes.</text>
</comment>
<comment type="tissue specificity">
    <text evidence="20">Expressed by polarized cells in liver, kidney and intestine. The highest expression is found in liver. Expressed in small intestine (PubMed:28408210).</text>
</comment>
<comment type="disease" evidence="7 10 11 12 13 18 19 23">
    <disease id="DI-01508">
        <name>Dubin-Johnson syndrome</name>
        <acronym>DJS</acronym>
        <description>Autosomal recessive disorder characterized by conjugated hyperbilirubinemia, an increase in the urinary excretion of coproporphyrin isomer I, deposition of melanin-like pigment in hepatocytes, and prolonged retention of sulfobromophthalein, but otherwise normal liver function.</description>
        <dbReference type="MIM" id="237500"/>
    </disease>
    <text>The disease is caused by variants affecting the gene represented in this entry.</text>
</comment>
<comment type="similarity">
    <text evidence="27">Belongs to the ABC transporter superfamily. ABCC family. Conjugate transporter (TC 3.A.1.208) subfamily.</text>
</comment>
<comment type="online information" name="ABCMdb">
    <link uri="http://abcm2.hegelab.org/search"/>
    <text>Database for mutations in ABC proteins</text>
</comment>
<dbReference type="EC" id="7.6.2.-" evidence="9 17"/>
<dbReference type="EC" id="7.6.2.2" evidence="8 14 15"/>
<dbReference type="EC" id="7.6.2.3" evidence="8 14"/>
<dbReference type="EMBL" id="U63970">
    <property type="protein sequence ID" value="AAB39892.1"/>
    <property type="molecule type" value="mRNA"/>
</dbReference>
<dbReference type="EMBL" id="U49248">
    <property type="protein sequence ID" value="AAB09422.1"/>
    <property type="molecule type" value="mRNA"/>
</dbReference>
<dbReference type="EMBL" id="X96395">
    <property type="protein sequence ID" value="CAA65259.2"/>
    <property type="molecule type" value="mRNA"/>
</dbReference>
<dbReference type="EMBL" id="AJ132244">
    <property type="protein sequence ID" value="CAB45309.1"/>
    <property type="molecule type" value="Genomic_DNA"/>
</dbReference>
<dbReference type="EMBL" id="AJ132287">
    <property type="protein sequence ID" value="CAB45309.1"/>
    <property type="status" value="JOINED"/>
    <property type="molecule type" value="Genomic_DNA"/>
</dbReference>
<dbReference type="EMBL" id="AJ245625">
    <property type="protein sequence ID" value="CAB45309.1"/>
    <property type="status" value="JOINED"/>
    <property type="molecule type" value="Genomic_DNA"/>
</dbReference>
<dbReference type="EMBL" id="AJ132288">
    <property type="protein sequence ID" value="CAB45309.1"/>
    <property type="status" value="JOINED"/>
    <property type="molecule type" value="Genomic_DNA"/>
</dbReference>
<dbReference type="EMBL" id="AJ132289">
    <property type="protein sequence ID" value="CAB45309.1"/>
    <property type="status" value="JOINED"/>
    <property type="molecule type" value="Genomic_DNA"/>
</dbReference>
<dbReference type="EMBL" id="AJ132290">
    <property type="protein sequence ID" value="CAB45309.1"/>
    <property type="status" value="JOINED"/>
    <property type="molecule type" value="Genomic_DNA"/>
</dbReference>
<dbReference type="EMBL" id="AJ132291">
    <property type="protein sequence ID" value="CAB45309.1"/>
    <property type="status" value="JOINED"/>
    <property type="molecule type" value="Genomic_DNA"/>
</dbReference>
<dbReference type="EMBL" id="AJ132292">
    <property type="protein sequence ID" value="CAB45309.1"/>
    <property type="status" value="JOINED"/>
    <property type="molecule type" value="Genomic_DNA"/>
</dbReference>
<dbReference type="EMBL" id="AJ132293">
    <property type="protein sequence ID" value="CAB45309.1"/>
    <property type="status" value="JOINED"/>
    <property type="molecule type" value="Genomic_DNA"/>
</dbReference>
<dbReference type="EMBL" id="AJ132294">
    <property type="protein sequence ID" value="CAB45309.1"/>
    <property type="status" value="JOINED"/>
    <property type="molecule type" value="Genomic_DNA"/>
</dbReference>
<dbReference type="EMBL" id="AJ132295">
    <property type="protein sequence ID" value="CAB45309.1"/>
    <property type="status" value="JOINED"/>
    <property type="molecule type" value="Genomic_DNA"/>
</dbReference>
<dbReference type="EMBL" id="AJ132296">
    <property type="protein sequence ID" value="CAB45309.1"/>
    <property type="status" value="JOINED"/>
    <property type="molecule type" value="Genomic_DNA"/>
</dbReference>
<dbReference type="EMBL" id="AJ132297">
    <property type="protein sequence ID" value="CAB45309.1"/>
    <property type="status" value="JOINED"/>
    <property type="molecule type" value="Genomic_DNA"/>
</dbReference>
<dbReference type="EMBL" id="AJ132298">
    <property type="protein sequence ID" value="CAB45309.1"/>
    <property type="status" value="JOINED"/>
    <property type="molecule type" value="Genomic_DNA"/>
</dbReference>
<dbReference type="EMBL" id="AJ132299">
    <property type="protein sequence ID" value="CAB45309.1"/>
    <property type="status" value="JOINED"/>
    <property type="molecule type" value="Genomic_DNA"/>
</dbReference>
<dbReference type="EMBL" id="AJ132300">
    <property type="protein sequence ID" value="CAB45309.1"/>
    <property type="status" value="JOINED"/>
    <property type="molecule type" value="Genomic_DNA"/>
</dbReference>
<dbReference type="EMBL" id="AJ132301">
    <property type="protein sequence ID" value="CAB45309.1"/>
    <property type="status" value="JOINED"/>
    <property type="molecule type" value="Genomic_DNA"/>
</dbReference>
<dbReference type="EMBL" id="AJ132302">
    <property type="protein sequence ID" value="CAB45309.1"/>
    <property type="status" value="JOINED"/>
    <property type="molecule type" value="Genomic_DNA"/>
</dbReference>
<dbReference type="EMBL" id="AJ132303">
    <property type="protein sequence ID" value="CAB45309.1"/>
    <property type="status" value="JOINED"/>
    <property type="molecule type" value="Genomic_DNA"/>
</dbReference>
<dbReference type="EMBL" id="AJ245626">
    <property type="protein sequence ID" value="CAB45309.1"/>
    <property type="status" value="JOINED"/>
    <property type="molecule type" value="Genomic_DNA"/>
</dbReference>
<dbReference type="EMBL" id="AJ132304">
    <property type="protein sequence ID" value="CAB45309.1"/>
    <property type="status" value="JOINED"/>
    <property type="molecule type" value="Genomic_DNA"/>
</dbReference>
<dbReference type="EMBL" id="AJ132305">
    <property type="protein sequence ID" value="CAB45309.1"/>
    <property type="status" value="JOINED"/>
    <property type="molecule type" value="Genomic_DNA"/>
</dbReference>
<dbReference type="EMBL" id="AJ132306">
    <property type="protein sequence ID" value="CAB45309.1"/>
    <property type="status" value="JOINED"/>
    <property type="molecule type" value="Genomic_DNA"/>
</dbReference>
<dbReference type="EMBL" id="AJ132307">
    <property type="protein sequence ID" value="CAB45309.1"/>
    <property type="status" value="JOINED"/>
    <property type="molecule type" value="Genomic_DNA"/>
</dbReference>
<dbReference type="EMBL" id="AJ132308">
    <property type="protein sequence ID" value="CAB45309.1"/>
    <property type="status" value="JOINED"/>
    <property type="molecule type" value="Genomic_DNA"/>
</dbReference>
<dbReference type="EMBL" id="AJ245627">
    <property type="protein sequence ID" value="CAB45309.1"/>
    <property type="status" value="JOINED"/>
    <property type="molecule type" value="Genomic_DNA"/>
</dbReference>
<dbReference type="EMBL" id="AJ132309">
    <property type="protein sequence ID" value="CAB45309.1"/>
    <property type="status" value="JOINED"/>
    <property type="molecule type" value="Genomic_DNA"/>
</dbReference>
<dbReference type="EMBL" id="AJ132310">
    <property type="protein sequence ID" value="CAB45309.1"/>
    <property type="status" value="JOINED"/>
    <property type="molecule type" value="Genomic_DNA"/>
</dbReference>
<dbReference type="EMBL" id="AJ132311">
    <property type="protein sequence ID" value="CAB45309.1"/>
    <property type="status" value="JOINED"/>
    <property type="molecule type" value="Genomic_DNA"/>
</dbReference>
<dbReference type="EMBL" id="AJ132312">
    <property type="protein sequence ID" value="CAB45309.1"/>
    <property type="status" value="JOINED"/>
    <property type="molecule type" value="Genomic_DNA"/>
</dbReference>
<dbReference type="EMBL" id="AJ132313">
    <property type="protein sequence ID" value="CAB45309.1"/>
    <property type="status" value="JOINED"/>
    <property type="molecule type" value="Genomic_DNA"/>
</dbReference>
<dbReference type="EMBL" id="AJ132314">
    <property type="protein sequence ID" value="CAB45309.1"/>
    <property type="status" value="JOINED"/>
    <property type="molecule type" value="Genomic_DNA"/>
</dbReference>
<dbReference type="EMBL" id="AL392107">
    <property type="status" value="NOT_ANNOTATED_CDS"/>
    <property type="molecule type" value="Genomic_DNA"/>
</dbReference>
<dbReference type="EMBL" id="AL133353">
    <property type="status" value="NOT_ANNOTATED_CDS"/>
    <property type="molecule type" value="Genomic_DNA"/>
</dbReference>
<dbReference type="EMBL" id="CH471066">
    <property type="protein sequence ID" value="EAW49853.1"/>
    <property type="molecule type" value="Genomic_DNA"/>
</dbReference>
<dbReference type="EMBL" id="BC136419">
    <property type="protein sequence ID" value="AAI36420.1"/>
    <property type="molecule type" value="mRNA"/>
</dbReference>
<dbReference type="CCDS" id="CCDS7484.1"/>
<dbReference type="PIR" id="S71841">
    <property type="entry name" value="S71841"/>
</dbReference>
<dbReference type="RefSeq" id="NP_000383.2">
    <property type="nucleotide sequence ID" value="NM_000392.5"/>
</dbReference>
<dbReference type="PDB" id="8IZQ">
    <property type="method" value="EM"/>
    <property type="resolution" value="3.31 A"/>
    <property type="chains" value="A=1-1545"/>
</dbReference>
<dbReference type="PDB" id="8IZR">
    <property type="method" value="EM"/>
    <property type="resolution" value="3.62 A"/>
    <property type="chains" value="A=1-1545"/>
</dbReference>
<dbReference type="PDB" id="8JX7">
    <property type="method" value="EM"/>
    <property type="resolution" value="3.60 A"/>
    <property type="chains" value="A=1-1545"/>
</dbReference>
<dbReference type="PDB" id="8JXQ">
    <property type="method" value="EM"/>
    <property type="resolution" value="3.32 A"/>
    <property type="chains" value="A=1-1545"/>
</dbReference>
<dbReference type="PDB" id="8JXU">
    <property type="method" value="EM"/>
    <property type="resolution" value="3.55 A"/>
    <property type="chains" value="A=1-1545"/>
</dbReference>
<dbReference type="PDB" id="8JY4">
    <property type="method" value="EM"/>
    <property type="resolution" value="3.58 A"/>
    <property type="chains" value="A=1-1545"/>
</dbReference>
<dbReference type="PDB" id="8JY5">
    <property type="method" value="EM"/>
    <property type="resolution" value="4.17 A"/>
    <property type="chains" value="A=1-1545"/>
</dbReference>
<dbReference type="PDB" id="9BR2">
    <property type="method" value="EM"/>
    <property type="resolution" value="3.41 A"/>
    <property type="chains" value="A=1-1545"/>
</dbReference>
<dbReference type="PDB" id="9BUK">
    <property type="method" value="EM"/>
    <property type="resolution" value="3.40 A"/>
    <property type="chains" value="A=1-1545"/>
</dbReference>
<dbReference type="PDB" id="9C12">
    <property type="method" value="EM"/>
    <property type="resolution" value="2.75 A"/>
    <property type="chains" value="A=1-1545"/>
</dbReference>
<dbReference type="PDB" id="9C2I">
    <property type="method" value="EM"/>
    <property type="resolution" value="3.62 A"/>
    <property type="chains" value="A=1-1545"/>
</dbReference>
<dbReference type="PDBsum" id="8IZQ"/>
<dbReference type="PDBsum" id="8IZR"/>
<dbReference type="PDBsum" id="8JX7"/>
<dbReference type="PDBsum" id="8JXQ"/>
<dbReference type="PDBsum" id="8JXU"/>
<dbReference type="PDBsum" id="8JY4"/>
<dbReference type="PDBsum" id="8JY5"/>
<dbReference type="PDBsum" id="9BR2"/>
<dbReference type="PDBsum" id="9BUK"/>
<dbReference type="PDBsum" id="9C12"/>
<dbReference type="PDBsum" id="9C2I"/>
<dbReference type="EMDB" id="EMD-35868"/>
<dbReference type="EMDB" id="EMD-35869"/>
<dbReference type="EMDB" id="EMD-36691"/>
<dbReference type="EMDB" id="EMD-36709"/>
<dbReference type="EMDB" id="EMD-36713"/>
<dbReference type="EMDB" id="EMD-36719"/>
<dbReference type="EMDB" id="EMD-36720"/>
<dbReference type="EMDB" id="EMD-44833"/>
<dbReference type="EMDB" id="EMD-44911"/>
<dbReference type="EMDB" id="EMD-45099"/>
<dbReference type="EMDB" id="EMD-45159"/>
<dbReference type="SMR" id="Q92887"/>
<dbReference type="BioGRID" id="107647">
    <property type="interactions" value="101"/>
</dbReference>
<dbReference type="FunCoup" id="Q92887">
    <property type="interactions" value="127"/>
</dbReference>
<dbReference type="IntAct" id="Q92887">
    <property type="interactions" value="21"/>
</dbReference>
<dbReference type="MINT" id="Q92887"/>
<dbReference type="STRING" id="9606.ENSP00000497274"/>
<dbReference type="BindingDB" id="Q92887"/>
<dbReference type="ChEMBL" id="CHEMBL5748"/>
<dbReference type="DrugBank" id="DB04789">
    <property type="generic name" value="5-methyltetrahydrofolic acid"/>
</dbReference>
<dbReference type="DrugBank" id="DB00345">
    <property type="generic name" value="Aminohippuric acid"/>
</dbReference>
<dbReference type="DrugBank" id="DB01169">
    <property type="generic name" value="Arsenic trioxide"/>
</dbReference>
<dbReference type="DrugBank" id="DB01076">
    <property type="generic name" value="Atorvastatin"/>
</dbReference>
<dbReference type="DrugBank" id="DB00171">
    <property type="generic name" value="ATP"/>
</dbReference>
<dbReference type="DrugBank" id="DB09060">
    <property type="generic name" value="Avibactam"/>
</dbReference>
<dbReference type="DrugBank" id="DB00207">
    <property type="generic name" value="Azithromycin"/>
</dbReference>
<dbReference type="DrugBank" id="DB16407">
    <property type="generic name" value="Azvudine"/>
</dbReference>
<dbReference type="DrugBank" id="DB15719">
    <property type="generic name" value="Belantamab mafodotin"/>
</dbReference>
<dbReference type="DrugBank" id="DB12151">
    <property type="generic name" value="Brincidofovir"/>
</dbReference>
<dbReference type="DrugBank" id="DB08907">
    <property type="generic name" value="Canagliflozin"/>
</dbReference>
<dbReference type="DrugBank" id="DB00564">
    <property type="generic name" value="Carbamazepine"/>
</dbReference>
<dbReference type="DrugBank" id="DB00958">
    <property type="generic name" value="Carboplatin"/>
</dbReference>
<dbReference type="DrugBank" id="DB04918">
    <property type="generic name" value="Ceftobiprole"/>
</dbReference>
<dbReference type="DrugBank" id="DB14733">
    <property type="generic name" value="Ceftobiprole medocaril"/>
</dbReference>
<dbReference type="DrugBank" id="DB00439">
    <property type="generic name" value="Cerivastatin"/>
</dbReference>
<dbReference type="DrugBank" id="DB02659">
    <property type="generic name" value="Cholic Acid"/>
</dbReference>
<dbReference type="DrugBank" id="DB00515">
    <property type="generic name" value="Cisplatin"/>
</dbReference>
<dbReference type="DrugBank" id="DB00286">
    <property type="generic name" value="Conjugated estrogens"/>
</dbReference>
<dbReference type="DrugBank" id="DB00091">
    <property type="generic name" value="Cyclosporine"/>
</dbReference>
<dbReference type="DrugBank" id="DB01234">
    <property type="generic name" value="Dexamethasone"/>
</dbReference>
<dbReference type="DrugBank" id="DB14649">
    <property type="generic name" value="Dexamethasone acetate"/>
</dbReference>
<dbReference type="DrugBank" id="DB01248">
    <property type="generic name" value="Docetaxel"/>
</dbReference>
<dbReference type="DrugBank" id="DB00997">
    <property type="generic name" value="Doxorubicin"/>
</dbReference>
<dbReference type="DrugBank" id="DB05187">
    <property type="generic name" value="Elafibranor"/>
</dbReference>
<dbReference type="DrugBank" id="DB09272">
    <property type="generic name" value="Eluxadoline"/>
</dbReference>
<dbReference type="DrugBank" id="DB00876">
    <property type="generic name" value="Eprosartan"/>
</dbReference>
<dbReference type="DrugBank" id="DB00199">
    <property type="generic name" value="Erythromycin"/>
</dbReference>
<dbReference type="DrugBank" id="DB00977">
    <property type="generic name" value="Ethinylestradiol"/>
</dbReference>
<dbReference type="DrugBank" id="DB00773">
    <property type="generic name" value="Etoposide"/>
</dbReference>
<dbReference type="DrugBank" id="DB00973">
    <property type="generic name" value="Ezetimibe"/>
</dbReference>
<dbReference type="DrugBank" id="DB00950">
    <property type="generic name" value="Fexofenadine"/>
</dbReference>
<dbReference type="DrugBank" id="DB01095">
    <property type="generic name" value="Fluvastatin"/>
</dbReference>
<dbReference type="DrugBank" id="DB00695">
    <property type="generic name" value="Furosemide"/>
</dbReference>
<dbReference type="DrugBank" id="DB02703">
    <property type="generic name" value="Fusidic acid"/>
</dbReference>
<dbReference type="DrugBank" id="DB00743">
    <property type="generic name" value="Gadobenic acid"/>
</dbReference>
<dbReference type="DrugBank" id="DB08884">
    <property type="generic name" value="Gadoxetic acid"/>
</dbReference>
<dbReference type="DrugBank" id="DB00798">
    <property type="generic name" value="Gentamicin"/>
</dbReference>
<dbReference type="DrugBank" id="DB00143">
    <property type="generic name" value="Glutathione"/>
</dbReference>
<dbReference type="DrugBank" id="DB01016">
    <property type="generic name" value="Glyburide"/>
</dbReference>
<dbReference type="DrugBank" id="DB00365">
    <property type="generic name" value="Grepafloxacin"/>
</dbReference>
<dbReference type="DrugBank" id="DB01892">
    <property type="generic name" value="Hyperforin"/>
</dbReference>
<dbReference type="DrugBank" id="DB00619">
    <property type="generic name" value="Imatinib"/>
</dbReference>
<dbReference type="DrugBank" id="DB00224">
    <property type="generic name" value="Indinavir"/>
</dbReference>
<dbReference type="DrugBank" id="DB09374">
    <property type="generic name" value="Indocyanine green acid form"/>
</dbReference>
<dbReference type="DrugBank" id="DB00328">
    <property type="generic name" value="Indomethacin"/>
</dbReference>
<dbReference type="DrugBank" id="DB00762">
    <property type="generic name" value="Irinotecan"/>
</dbReference>
<dbReference type="DrugBank" id="DB00602">
    <property type="generic name" value="Ivermectin"/>
</dbReference>
<dbReference type="DrugBank" id="DB00709">
    <property type="generic name" value="Lamivudine"/>
</dbReference>
<dbReference type="DrugBank" id="DB12070">
    <property type="generic name" value="Letermovir"/>
</dbReference>
<dbReference type="DrugBank" id="DB00978">
    <property type="generic name" value="Lomefloxacin"/>
</dbReference>
<dbReference type="DrugBank" id="DB06448">
    <property type="generic name" value="Lonafarnib"/>
</dbReference>
<dbReference type="DrugBank" id="DB00227">
    <property type="generic name" value="Lovastatin"/>
</dbReference>
<dbReference type="DrugBank" id="DB14642">
    <property type="generic name" value="Lypressin"/>
</dbReference>
<dbReference type="DrugBank" id="DB00563">
    <property type="generic name" value="Methotrexate"/>
</dbReference>
<dbReference type="DrugBank" id="DB00688">
    <property type="generic name" value="Mycophenolate mofetil"/>
</dbReference>
<dbReference type="DrugBank" id="DB01115">
    <property type="generic name" value="Nifedipine"/>
</dbReference>
<dbReference type="DrugBank" id="DB00698">
    <property type="generic name" value="Nitrofurantoin"/>
</dbReference>
<dbReference type="DrugBank" id="DB00957">
    <property type="generic name" value="Norgestimate"/>
</dbReference>
<dbReference type="DrugBank" id="DB00104">
    <property type="generic name" value="Octreotide"/>
</dbReference>
<dbReference type="DrugBank" id="DB01165">
    <property type="generic name" value="Ofloxacin"/>
</dbReference>
<dbReference type="DrugBank" id="DB00275">
    <property type="generic name" value="Olmesartan"/>
</dbReference>
<dbReference type="DrugBank" id="DB00526">
    <property type="generic name" value="Oxaliplatin"/>
</dbReference>
<dbReference type="DrugBank" id="DB01229">
    <property type="generic name" value="Paclitaxel"/>
</dbReference>
<dbReference type="DrugBank" id="DB01174">
    <property type="generic name" value="Phenobarbital"/>
</dbReference>
<dbReference type="DrugBank" id="DB00252">
    <property type="generic name" value="Phenytoin"/>
</dbReference>
<dbReference type="DrugBank" id="DB08860">
    <property type="generic name" value="Pitavastatin"/>
</dbReference>
<dbReference type="DrugBank" id="DB06813">
    <property type="generic name" value="Pralatrexate"/>
</dbReference>
<dbReference type="DrugBank" id="DB01411">
    <property type="generic name" value="Pranlukast"/>
</dbReference>
<dbReference type="DrugBank" id="DB00175">
    <property type="generic name" value="Pravastatin"/>
</dbReference>
<dbReference type="DrugBank" id="DB01032">
    <property type="generic name" value="Probenecid"/>
</dbReference>
<dbReference type="DrugBank" id="DB04216">
    <property type="generic name" value="Quercetin"/>
</dbReference>
<dbReference type="DrugBank" id="DB00908">
    <property type="generic name" value="Quinidine"/>
</dbReference>
<dbReference type="DrugBank" id="DB00481">
    <property type="generic name" value="Raloxifene"/>
</dbReference>
<dbReference type="DrugBank" id="DB00206">
    <property type="generic name" value="Reserpine"/>
</dbReference>
<dbReference type="DrugBank" id="DB01045">
    <property type="generic name" value="Rifampin"/>
</dbReference>
<dbReference type="DrugBank" id="DB00503">
    <property type="generic name" value="Ritonavir"/>
</dbReference>
<dbReference type="DrugBank" id="DB01098">
    <property type="generic name" value="Rosuvastatin"/>
</dbReference>
<dbReference type="DrugBank" id="DB01232">
    <property type="generic name" value="Saquinavir"/>
</dbReference>
<dbReference type="DrugBank" id="DB06290">
    <property type="generic name" value="Simeprevir"/>
</dbReference>
<dbReference type="DrugBank" id="DB00641">
    <property type="generic name" value="Simvastatin"/>
</dbReference>
<dbReference type="DrugBank" id="DB00398">
    <property type="generic name" value="Sorafenib"/>
</dbReference>
<dbReference type="DrugBank" id="DB12713">
    <property type="generic name" value="Sotagliflozin"/>
</dbReference>
<dbReference type="DrugBank" id="DB01208">
    <property type="generic name" value="Sparfloxacin"/>
</dbReference>
<dbReference type="DrugBank" id="DB00421">
    <property type="generic name" value="Spironolactone"/>
</dbReference>
<dbReference type="DrugBank" id="DB00795">
    <property type="generic name" value="Sulfasalazine"/>
</dbReference>
<dbReference type="DrugBank" id="DB01138">
    <property type="generic name" value="Sulfinpyrazone"/>
</dbReference>
<dbReference type="DrugBank" id="DB01268">
    <property type="generic name" value="Sunitinib"/>
</dbReference>
<dbReference type="DrugBank" id="DB11770">
    <property type="generic name" value="Talinolol"/>
</dbReference>
<dbReference type="DrugBank" id="DB00675">
    <property type="generic name" value="Tamoxifen"/>
</dbReference>
<dbReference type="DrugBank" id="DB04348">
    <property type="generic name" value="Taurocholic acid"/>
</dbReference>
<dbReference type="DrugBank" id="DB00966">
    <property type="generic name" value="Telmisartan"/>
</dbReference>
<dbReference type="DrugBank" id="DB00300">
    <property type="generic name" value="Tenofovir disoproxil"/>
</dbReference>
<dbReference type="DrugBank" id="DB00116">
    <property type="generic name" value="Tetrahydrofolic acid"/>
</dbReference>
<dbReference type="DrugBank" id="DB04100">
    <property type="generic name" value="Tricarbonyl(1,10-phenanthroline)rhenium(1+)"/>
</dbReference>
<dbReference type="DrugBank" id="DB01586">
    <property type="generic name" value="Ursodeoxycholic acid"/>
</dbReference>
<dbReference type="DrugBank" id="DB00177">
    <property type="generic name" value="Valsartan"/>
</dbReference>
<dbReference type="DrugBank" id="DB00067">
    <property type="generic name" value="Vasopressin"/>
</dbReference>
<dbReference type="DrugBank" id="DB00570">
    <property type="generic name" value="Vinblastine"/>
</dbReference>
<dbReference type="DrugBank" id="DB00541">
    <property type="generic name" value="Vincristine"/>
</dbReference>
<dbReference type="DrugCentral" id="Q92887"/>
<dbReference type="GuidetoPHARMACOLOGY" id="780"/>
<dbReference type="SwissLipids" id="SLP:000001599"/>
<dbReference type="TCDB" id="3.A.1.208.2">
    <property type="family name" value="the atp-binding cassette (abc) superfamily"/>
</dbReference>
<dbReference type="GlyCosmos" id="Q92887">
    <property type="glycosylation" value="3 sites, No reported glycans"/>
</dbReference>
<dbReference type="GlyGen" id="Q92887">
    <property type="glycosylation" value="3 sites, 1 N-linked glycan (1 site)"/>
</dbReference>
<dbReference type="iPTMnet" id="Q92887"/>
<dbReference type="PhosphoSitePlus" id="Q92887"/>
<dbReference type="BioMuta" id="ABCC2"/>
<dbReference type="DMDM" id="308153583"/>
<dbReference type="jPOST" id="Q92887"/>
<dbReference type="MassIVE" id="Q92887"/>
<dbReference type="PaxDb" id="9606-ENSP00000359478"/>
<dbReference type="PeptideAtlas" id="Q92887"/>
<dbReference type="ProteomicsDB" id="75571"/>
<dbReference type="Pumba" id="Q92887"/>
<dbReference type="Antibodypedia" id="17520">
    <property type="antibodies" value="367 antibodies from 39 providers"/>
</dbReference>
<dbReference type="DNASU" id="1244"/>
<dbReference type="Ensembl" id="ENST00000647814.1">
    <property type="protein sequence ID" value="ENSP00000497274.1"/>
    <property type="gene ID" value="ENSG00000023839.12"/>
</dbReference>
<dbReference type="GeneID" id="1244"/>
<dbReference type="KEGG" id="hsa:1244"/>
<dbReference type="MANE-Select" id="ENST00000647814.1">
    <property type="protein sequence ID" value="ENSP00000497274.1"/>
    <property type="RefSeq nucleotide sequence ID" value="NM_000392.5"/>
    <property type="RefSeq protein sequence ID" value="NP_000383.2"/>
</dbReference>
<dbReference type="UCSC" id="uc001kqf.3">
    <property type="organism name" value="human"/>
</dbReference>
<dbReference type="AGR" id="HGNC:53"/>
<dbReference type="CTD" id="1244"/>
<dbReference type="DisGeNET" id="1244"/>
<dbReference type="GeneCards" id="ABCC2"/>
<dbReference type="HGNC" id="HGNC:53">
    <property type="gene designation" value="ABCC2"/>
</dbReference>
<dbReference type="HPA" id="ENSG00000023839">
    <property type="expression patterns" value="Tissue enhanced (intestine, liver)"/>
</dbReference>
<dbReference type="MalaCards" id="ABCC2"/>
<dbReference type="MIM" id="237500">
    <property type="type" value="phenotype"/>
</dbReference>
<dbReference type="MIM" id="601107">
    <property type="type" value="gene"/>
</dbReference>
<dbReference type="neXtProt" id="NX_Q92887"/>
<dbReference type="OpenTargets" id="ENSG00000023839"/>
<dbReference type="Orphanet" id="234">
    <property type="disease" value="Dubin-Johnson syndrome"/>
</dbReference>
<dbReference type="PharmGKB" id="PA116"/>
<dbReference type="VEuPathDB" id="HostDB:ENSG00000023839"/>
<dbReference type="eggNOG" id="KOG0054">
    <property type="taxonomic scope" value="Eukaryota"/>
</dbReference>
<dbReference type="GeneTree" id="ENSGT00940000161741"/>
<dbReference type="HOGENOM" id="CLU_000604_27_3_1"/>
<dbReference type="InParanoid" id="Q92887"/>
<dbReference type="OMA" id="RRRYILW"/>
<dbReference type="OrthoDB" id="6500128at2759"/>
<dbReference type="PAN-GO" id="Q92887">
    <property type="GO annotations" value="3 GO annotations based on evolutionary models"/>
</dbReference>
<dbReference type="PhylomeDB" id="Q92887"/>
<dbReference type="TreeFam" id="TF105199"/>
<dbReference type="BRENDA" id="7.6.2.2">
    <property type="organism ID" value="2681"/>
</dbReference>
<dbReference type="BRENDA" id="7.6.2.3">
    <property type="organism ID" value="2681"/>
</dbReference>
<dbReference type="PathwayCommons" id="Q92887"/>
<dbReference type="Reactome" id="R-HSA-189483">
    <property type="pathway name" value="Heme degradation"/>
</dbReference>
<dbReference type="Reactome" id="R-HSA-382556">
    <property type="pathway name" value="ABC-family proteins mediated transport"/>
</dbReference>
<dbReference type="Reactome" id="R-HSA-5679001">
    <property type="pathway name" value="Defective ABCC2 causes DJS"/>
</dbReference>
<dbReference type="Reactome" id="R-HSA-9749641">
    <property type="pathway name" value="Aspirin ADME"/>
</dbReference>
<dbReference type="Reactome" id="R-HSA-9753281">
    <property type="pathway name" value="Paracetamol ADME"/>
</dbReference>
<dbReference type="Reactome" id="R-HSA-9754706">
    <property type="pathway name" value="Atorvastatin ADME"/>
</dbReference>
<dbReference type="SABIO-RK" id="Q92887"/>
<dbReference type="SignaLink" id="Q92887"/>
<dbReference type="SIGNOR" id="Q92887"/>
<dbReference type="BioGRID-ORCS" id="1244">
    <property type="hits" value="14 hits in 1162 CRISPR screens"/>
</dbReference>
<dbReference type="ChiTaRS" id="ABCC2">
    <property type="organism name" value="human"/>
</dbReference>
<dbReference type="GeneWiki" id="Multidrug_resistance-associated_protein_2"/>
<dbReference type="GenomeRNAi" id="1244"/>
<dbReference type="Pharos" id="Q92887">
    <property type="development level" value="Tchem"/>
</dbReference>
<dbReference type="PRO" id="PR:Q92887"/>
<dbReference type="Proteomes" id="UP000005640">
    <property type="component" value="Chromosome 10"/>
</dbReference>
<dbReference type="RNAct" id="Q92887">
    <property type="molecule type" value="protein"/>
</dbReference>
<dbReference type="Bgee" id="ENSG00000023839">
    <property type="expression patterns" value="Expressed in right lobe of liver and 99 other cell types or tissues"/>
</dbReference>
<dbReference type="ExpressionAtlas" id="Q92887">
    <property type="expression patterns" value="baseline and differential"/>
</dbReference>
<dbReference type="GO" id="GO:0016324">
    <property type="term" value="C:apical plasma membrane"/>
    <property type="evidence" value="ECO:0000314"/>
    <property type="project" value="UniProtKB"/>
</dbReference>
<dbReference type="GO" id="GO:0009986">
    <property type="term" value="C:cell surface"/>
    <property type="evidence" value="ECO:0000314"/>
    <property type="project" value="UniProtKB"/>
</dbReference>
<dbReference type="GO" id="GO:0046581">
    <property type="term" value="C:intercellular canaliculus"/>
    <property type="evidence" value="ECO:0007669"/>
    <property type="project" value="Ensembl"/>
</dbReference>
<dbReference type="GO" id="GO:0005886">
    <property type="term" value="C:plasma membrane"/>
    <property type="evidence" value="ECO:0000304"/>
    <property type="project" value="Reactome"/>
</dbReference>
<dbReference type="GO" id="GO:0015431">
    <property type="term" value="F:ABC-type glutathione S-conjugate transporter activity"/>
    <property type="evidence" value="ECO:0000315"/>
    <property type="project" value="UniProtKB"/>
</dbReference>
<dbReference type="GO" id="GO:0140359">
    <property type="term" value="F:ABC-type transporter activity"/>
    <property type="evidence" value="ECO:0000304"/>
    <property type="project" value="Reactome"/>
</dbReference>
<dbReference type="GO" id="GO:0008559">
    <property type="term" value="F:ABC-type xenobiotic transporter activity"/>
    <property type="evidence" value="ECO:0000315"/>
    <property type="project" value="UniProtKB"/>
</dbReference>
<dbReference type="GO" id="GO:0005524">
    <property type="term" value="F:ATP binding"/>
    <property type="evidence" value="ECO:0007669"/>
    <property type="project" value="UniProtKB-KW"/>
</dbReference>
<dbReference type="GO" id="GO:0016887">
    <property type="term" value="F:ATP hydrolysis activity"/>
    <property type="evidence" value="ECO:0007669"/>
    <property type="project" value="InterPro"/>
</dbReference>
<dbReference type="GO" id="GO:0043225">
    <property type="term" value="F:ATPase-coupled inorganic anion transmembrane transporter activity"/>
    <property type="evidence" value="ECO:0000304"/>
    <property type="project" value="Reactome"/>
</dbReference>
<dbReference type="GO" id="GO:0042626">
    <property type="term" value="F:ATPase-coupled transmembrane transporter activity"/>
    <property type="evidence" value="ECO:0000314"/>
    <property type="project" value="UniProtKB"/>
</dbReference>
<dbReference type="GO" id="GO:0015127">
    <property type="term" value="F:bilirubin transmembrane transporter activity"/>
    <property type="evidence" value="ECO:0000315"/>
    <property type="project" value="UniProtKB"/>
</dbReference>
<dbReference type="GO" id="GO:0008514">
    <property type="term" value="F:organic anion transmembrane transporter activity"/>
    <property type="evidence" value="ECO:0000304"/>
    <property type="project" value="ProtInc"/>
</dbReference>
<dbReference type="GO" id="GO:0042910">
    <property type="term" value="F:xenobiotic transmembrane transporter activity"/>
    <property type="evidence" value="ECO:0000314"/>
    <property type="project" value="UniProtKB"/>
</dbReference>
<dbReference type="GO" id="GO:0015721">
    <property type="term" value="P:bile acid and bile salt transport"/>
    <property type="evidence" value="ECO:0000315"/>
    <property type="project" value="UniProtKB"/>
</dbReference>
<dbReference type="GO" id="GO:0015723">
    <property type="term" value="P:bilirubin transport"/>
    <property type="evidence" value="ECO:0000315"/>
    <property type="project" value="UniProtKB"/>
</dbReference>
<dbReference type="GO" id="GO:0042167">
    <property type="term" value="P:heme catabolic process"/>
    <property type="evidence" value="ECO:0000304"/>
    <property type="project" value="Reactome"/>
</dbReference>
<dbReference type="GO" id="GO:0071716">
    <property type="term" value="P:leukotriene transport"/>
    <property type="evidence" value="ECO:0000315"/>
    <property type="project" value="UniProtKB"/>
</dbReference>
<dbReference type="GO" id="GO:0010629">
    <property type="term" value="P:negative regulation of gene expression"/>
    <property type="evidence" value="ECO:0000250"/>
    <property type="project" value="ARUK-UCL"/>
</dbReference>
<dbReference type="GO" id="GO:0070633">
    <property type="term" value="P:transepithelial transport"/>
    <property type="evidence" value="ECO:0000250"/>
    <property type="project" value="ARUK-UCL"/>
</dbReference>
<dbReference type="GO" id="GO:0055085">
    <property type="term" value="P:transmembrane transport"/>
    <property type="evidence" value="ECO:0000318"/>
    <property type="project" value="GO_Central"/>
</dbReference>
<dbReference type="GO" id="GO:0150104">
    <property type="term" value="P:transport across blood-brain barrier"/>
    <property type="evidence" value="ECO:0000303"/>
    <property type="project" value="ARUK-UCL"/>
</dbReference>
<dbReference type="GO" id="GO:0046618">
    <property type="term" value="P:xenobiotic export from cell"/>
    <property type="evidence" value="ECO:0000315"/>
    <property type="project" value="UniProtKB"/>
</dbReference>
<dbReference type="GO" id="GO:0006805">
    <property type="term" value="P:xenobiotic metabolic process"/>
    <property type="evidence" value="ECO:0000304"/>
    <property type="project" value="Reactome"/>
</dbReference>
<dbReference type="GO" id="GO:0006855">
    <property type="term" value="P:xenobiotic transmembrane transport"/>
    <property type="evidence" value="ECO:0000315"/>
    <property type="project" value="UniProtKB"/>
</dbReference>
<dbReference type="GO" id="GO:1990962">
    <property type="term" value="P:xenobiotic transport across blood-brain barrier"/>
    <property type="evidence" value="ECO:0000250"/>
    <property type="project" value="ARUK-UCL"/>
</dbReference>
<dbReference type="CDD" id="cd18595">
    <property type="entry name" value="ABC_6TM_MRP1_2_3_6_D1_like"/>
    <property type="match status" value="1"/>
</dbReference>
<dbReference type="CDD" id="cd18603">
    <property type="entry name" value="ABC_6TM_MRP1_2_3_6_D2_like"/>
    <property type="match status" value="1"/>
</dbReference>
<dbReference type="CDD" id="cd03250">
    <property type="entry name" value="ABCC_MRP_domain1"/>
    <property type="match status" value="1"/>
</dbReference>
<dbReference type="CDD" id="cd03244">
    <property type="entry name" value="ABCC_MRP_domain2"/>
    <property type="match status" value="1"/>
</dbReference>
<dbReference type="FunFam" id="3.40.50.300:FF:000293">
    <property type="entry name" value="ATP binding cassette subfamily C member 1"/>
    <property type="match status" value="1"/>
</dbReference>
<dbReference type="FunFam" id="1.20.1560.10:FF:000001">
    <property type="entry name" value="ATP-binding cassette subfamily C member 1"/>
    <property type="match status" value="1"/>
</dbReference>
<dbReference type="FunFam" id="1.20.1560.10:FF:000007">
    <property type="entry name" value="ATP-binding cassette subfamily C member 1"/>
    <property type="match status" value="1"/>
</dbReference>
<dbReference type="FunFam" id="3.40.50.300:FF:000074">
    <property type="entry name" value="Multidrug resistance-associated protein 5 isoform 1"/>
    <property type="match status" value="1"/>
</dbReference>
<dbReference type="Gene3D" id="1.20.1560.10">
    <property type="entry name" value="ABC transporter type 1, transmembrane domain"/>
    <property type="match status" value="2"/>
</dbReference>
<dbReference type="Gene3D" id="3.40.50.300">
    <property type="entry name" value="P-loop containing nucleotide triphosphate hydrolases"/>
    <property type="match status" value="2"/>
</dbReference>
<dbReference type="InterPro" id="IPR003593">
    <property type="entry name" value="AAA+_ATPase"/>
</dbReference>
<dbReference type="InterPro" id="IPR011527">
    <property type="entry name" value="ABC1_TM_dom"/>
</dbReference>
<dbReference type="InterPro" id="IPR036640">
    <property type="entry name" value="ABC1_TM_sf"/>
</dbReference>
<dbReference type="InterPro" id="IPR003439">
    <property type="entry name" value="ABC_transporter-like_ATP-bd"/>
</dbReference>
<dbReference type="InterPro" id="IPR017871">
    <property type="entry name" value="ABC_transporter-like_CS"/>
</dbReference>
<dbReference type="InterPro" id="IPR050173">
    <property type="entry name" value="ABC_transporter_C-like"/>
</dbReference>
<dbReference type="InterPro" id="IPR005292">
    <property type="entry name" value="MRP"/>
</dbReference>
<dbReference type="InterPro" id="IPR027417">
    <property type="entry name" value="P-loop_NTPase"/>
</dbReference>
<dbReference type="InterPro" id="IPR056227">
    <property type="entry name" value="TMD0_ABC"/>
</dbReference>
<dbReference type="NCBIfam" id="TIGR00957">
    <property type="entry name" value="MRP_assoc_pro"/>
    <property type="match status" value="1"/>
</dbReference>
<dbReference type="PANTHER" id="PTHR24223">
    <property type="entry name" value="ATP-BINDING CASSETTE SUB-FAMILY C"/>
    <property type="match status" value="1"/>
</dbReference>
<dbReference type="PANTHER" id="PTHR24223:SF176">
    <property type="entry name" value="ATP-BINDING CASSETTE SUB-FAMILY C MEMBER 2"/>
    <property type="match status" value="1"/>
</dbReference>
<dbReference type="Pfam" id="PF00664">
    <property type="entry name" value="ABC_membrane"/>
    <property type="match status" value="2"/>
</dbReference>
<dbReference type="Pfam" id="PF00005">
    <property type="entry name" value="ABC_tran"/>
    <property type="match status" value="2"/>
</dbReference>
<dbReference type="Pfam" id="PF24357">
    <property type="entry name" value="TMD0_ABC"/>
    <property type="match status" value="1"/>
</dbReference>
<dbReference type="SMART" id="SM00382">
    <property type="entry name" value="AAA"/>
    <property type="match status" value="2"/>
</dbReference>
<dbReference type="SUPFAM" id="SSF90123">
    <property type="entry name" value="ABC transporter transmembrane region"/>
    <property type="match status" value="2"/>
</dbReference>
<dbReference type="SUPFAM" id="SSF52540">
    <property type="entry name" value="P-loop containing nucleoside triphosphate hydrolases"/>
    <property type="match status" value="2"/>
</dbReference>
<dbReference type="PROSITE" id="PS50929">
    <property type="entry name" value="ABC_TM1F"/>
    <property type="match status" value="2"/>
</dbReference>
<dbReference type="PROSITE" id="PS00211">
    <property type="entry name" value="ABC_TRANSPORTER_1"/>
    <property type="match status" value="1"/>
</dbReference>
<dbReference type="PROSITE" id="PS50893">
    <property type="entry name" value="ABC_TRANSPORTER_2"/>
    <property type="match status" value="2"/>
</dbReference>
<organism>
    <name type="scientific">Homo sapiens</name>
    <name type="common">Human</name>
    <dbReference type="NCBI Taxonomy" id="9606"/>
    <lineage>
        <taxon>Eukaryota</taxon>
        <taxon>Metazoa</taxon>
        <taxon>Chordata</taxon>
        <taxon>Craniata</taxon>
        <taxon>Vertebrata</taxon>
        <taxon>Euteleostomi</taxon>
        <taxon>Mammalia</taxon>
        <taxon>Eutheria</taxon>
        <taxon>Euarchontoglires</taxon>
        <taxon>Primates</taxon>
        <taxon>Haplorrhini</taxon>
        <taxon>Catarrhini</taxon>
        <taxon>Hominidae</taxon>
        <taxon>Homo</taxon>
    </lineage>
</organism>
<reference key="1">
    <citation type="journal article" date="1996" name="Cancer Res.">
        <title>A human canalicular multispecific organic anion transporter (cMOAT) gene is overexpressed in cisplatin-resistant human cancer cell lines with decreased drug accumulation.</title>
        <authorList>
            <person name="Taniguchi K."/>
            <person name="Wada M."/>
            <person name="Kohno K."/>
            <person name="Nakamura T."/>
            <person name="Kawabe T."/>
            <person name="Kawakami M."/>
            <person name="Kagotani K."/>
            <person name="Okumura K."/>
            <person name="Akiyama S."/>
            <person name="Kuwano M."/>
        </authorList>
    </citation>
    <scope>NUCLEOTIDE SEQUENCE [MRNA]</scope>
    <scope>VARIANT PHE-39</scope>
</reference>
<reference key="2">
    <citation type="submission" date="1996-02" db="EMBL/GenBank/DDBJ databases">
        <authorList>
            <person name="Kool M."/>
            <person name="de Haas M."/>
            <person name="Ponne N.J."/>
            <person name="Paulusma C.C."/>
            <person name="Oude-Elferink R.P.J."/>
            <person name="Baas F."/>
            <person name="Borst P."/>
        </authorList>
    </citation>
    <scope>NUCLEOTIDE SEQUENCE [MRNA]</scope>
    <scope>VARIANTS PHE-39; GLU-1188 AND TYR-1515</scope>
</reference>
<reference key="3">
    <citation type="journal article" date="1996" name="J. Biol. Chem.">
        <title>cDNA cloning of the hepatocyte canalicular isoform of the multidrug resistance protein, cMrp, reveals a novel conjugate export pump deficient in hyperbilirubinemic mutant rats.</title>
        <authorList>
            <person name="Buechler M."/>
            <person name="Koenig J."/>
            <person name="Brom M."/>
            <person name="Kartenbeck J."/>
            <person name="Spring H."/>
            <person name="Horie T."/>
            <person name="Keppler D."/>
        </authorList>
    </citation>
    <scope>NUCLEOTIDE SEQUENCE [MRNA]</scope>
    <scope>VARIANT PHE-39</scope>
</reference>
<reference key="4">
    <citation type="submission" date="1996-08" db="EMBL/GenBank/DDBJ databases">
        <authorList>
            <person name="Keppler D."/>
        </authorList>
    </citation>
    <scope>SEQUENCE REVISION</scope>
</reference>
<reference key="5">
    <citation type="journal article" date="1999" name="Gastroenterology">
        <title>Exon-intron organization of the human multidrug-resistance protein 2 (MRP2) gene mutated in Dubin-Johnson syndrome.</title>
        <authorList>
            <person name="Tsujii H."/>
            <person name="Koenig J."/>
            <person name="Rost D."/>
            <person name="Stoeckel B."/>
            <person name="Leuschner U."/>
            <person name="Keppler D."/>
        </authorList>
    </citation>
    <scope>NUCLEOTIDE SEQUENCE [GENOMIC DNA]</scope>
    <scope>VARIANT PHE-39</scope>
    <scope>VARIANT DJS 1392-ARG-MET-1393 DEL</scope>
</reference>
<reference key="6">
    <citation type="journal article" date="2004" name="Nature">
        <title>The DNA sequence and comparative analysis of human chromosome 10.</title>
        <authorList>
            <person name="Deloukas P."/>
            <person name="Earthrowl M.E."/>
            <person name="Grafham D.V."/>
            <person name="Rubenfield M."/>
            <person name="French L."/>
            <person name="Steward C.A."/>
            <person name="Sims S.K."/>
            <person name="Jones M.C."/>
            <person name="Searle S."/>
            <person name="Scott C."/>
            <person name="Howe K."/>
            <person name="Hunt S.E."/>
            <person name="Andrews T.D."/>
            <person name="Gilbert J.G.R."/>
            <person name="Swarbreck D."/>
            <person name="Ashurst J.L."/>
            <person name="Taylor A."/>
            <person name="Battles J."/>
            <person name="Bird C.P."/>
            <person name="Ainscough R."/>
            <person name="Almeida J.P."/>
            <person name="Ashwell R.I.S."/>
            <person name="Ambrose K.D."/>
            <person name="Babbage A.K."/>
            <person name="Bagguley C.L."/>
            <person name="Bailey J."/>
            <person name="Banerjee R."/>
            <person name="Bates K."/>
            <person name="Beasley H."/>
            <person name="Bray-Allen S."/>
            <person name="Brown A.J."/>
            <person name="Brown J.Y."/>
            <person name="Burford D.C."/>
            <person name="Burrill W."/>
            <person name="Burton J."/>
            <person name="Cahill P."/>
            <person name="Camire D."/>
            <person name="Carter N.P."/>
            <person name="Chapman J.C."/>
            <person name="Clark S.Y."/>
            <person name="Clarke G."/>
            <person name="Clee C.M."/>
            <person name="Clegg S."/>
            <person name="Corby N."/>
            <person name="Coulson A."/>
            <person name="Dhami P."/>
            <person name="Dutta I."/>
            <person name="Dunn M."/>
            <person name="Faulkner L."/>
            <person name="Frankish A."/>
            <person name="Frankland J.A."/>
            <person name="Garner P."/>
            <person name="Garnett J."/>
            <person name="Gribble S."/>
            <person name="Griffiths C."/>
            <person name="Grocock R."/>
            <person name="Gustafson E."/>
            <person name="Hammond S."/>
            <person name="Harley J.L."/>
            <person name="Hart E."/>
            <person name="Heath P.D."/>
            <person name="Ho T.P."/>
            <person name="Hopkins B."/>
            <person name="Horne J."/>
            <person name="Howden P.J."/>
            <person name="Huckle E."/>
            <person name="Hynds C."/>
            <person name="Johnson C."/>
            <person name="Johnson D."/>
            <person name="Kana A."/>
            <person name="Kay M."/>
            <person name="Kimberley A.M."/>
            <person name="Kershaw J.K."/>
            <person name="Kokkinaki M."/>
            <person name="Laird G.K."/>
            <person name="Lawlor S."/>
            <person name="Lee H.M."/>
            <person name="Leongamornlert D.A."/>
            <person name="Laird G."/>
            <person name="Lloyd C."/>
            <person name="Lloyd D.M."/>
            <person name="Loveland J."/>
            <person name="Lovell J."/>
            <person name="McLaren S."/>
            <person name="McLay K.E."/>
            <person name="McMurray A."/>
            <person name="Mashreghi-Mohammadi M."/>
            <person name="Matthews L."/>
            <person name="Milne S."/>
            <person name="Nickerson T."/>
            <person name="Nguyen M."/>
            <person name="Overton-Larty E."/>
            <person name="Palmer S.A."/>
            <person name="Pearce A.V."/>
            <person name="Peck A.I."/>
            <person name="Pelan S."/>
            <person name="Phillimore B."/>
            <person name="Porter K."/>
            <person name="Rice C.M."/>
            <person name="Rogosin A."/>
            <person name="Ross M.T."/>
            <person name="Sarafidou T."/>
            <person name="Sehra H.K."/>
            <person name="Shownkeen R."/>
            <person name="Skuce C.D."/>
            <person name="Smith M."/>
            <person name="Standring L."/>
            <person name="Sycamore N."/>
            <person name="Tester J."/>
            <person name="Thorpe A."/>
            <person name="Torcasso W."/>
            <person name="Tracey A."/>
            <person name="Tromans A."/>
            <person name="Tsolas J."/>
            <person name="Wall M."/>
            <person name="Walsh J."/>
            <person name="Wang H."/>
            <person name="Weinstock K."/>
            <person name="West A.P."/>
            <person name="Willey D.L."/>
            <person name="Whitehead S.L."/>
            <person name="Wilming L."/>
            <person name="Wray P.W."/>
            <person name="Young L."/>
            <person name="Chen Y."/>
            <person name="Lovering R.C."/>
            <person name="Moschonas N.K."/>
            <person name="Siebert R."/>
            <person name="Fechtel K."/>
            <person name="Bentley D."/>
            <person name="Durbin R.M."/>
            <person name="Hubbard T."/>
            <person name="Doucette-Stamm L."/>
            <person name="Beck S."/>
            <person name="Smith D.R."/>
            <person name="Rogers J."/>
        </authorList>
    </citation>
    <scope>NUCLEOTIDE SEQUENCE [LARGE SCALE GENOMIC DNA]</scope>
</reference>
<reference key="7">
    <citation type="submission" date="2005-09" db="EMBL/GenBank/DDBJ databases">
        <authorList>
            <person name="Mural R.J."/>
            <person name="Istrail S."/>
            <person name="Sutton G.G."/>
            <person name="Florea L."/>
            <person name="Halpern A.L."/>
            <person name="Mobarry C.M."/>
            <person name="Lippert R."/>
            <person name="Walenz B."/>
            <person name="Shatkay H."/>
            <person name="Dew I."/>
            <person name="Miller J.R."/>
            <person name="Flanigan M.J."/>
            <person name="Edwards N.J."/>
            <person name="Bolanos R."/>
            <person name="Fasulo D."/>
            <person name="Halldorsson B.V."/>
            <person name="Hannenhalli S."/>
            <person name="Turner R."/>
            <person name="Yooseph S."/>
            <person name="Lu F."/>
            <person name="Nusskern D.R."/>
            <person name="Shue B.C."/>
            <person name="Zheng X.H."/>
            <person name="Zhong F."/>
            <person name="Delcher A.L."/>
            <person name="Huson D.H."/>
            <person name="Kravitz S.A."/>
            <person name="Mouchard L."/>
            <person name="Reinert K."/>
            <person name="Remington K.A."/>
            <person name="Clark A.G."/>
            <person name="Waterman M.S."/>
            <person name="Eichler E.E."/>
            <person name="Adams M.D."/>
            <person name="Hunkapiller M.W."/>
            <person name="Myers E.W."/>
            <person name="Venter J.C."/>
        </authorList>
    </citation>
    <scope>NUCLEOTIDE SEQUENCE [LARGE SCALE GENOMIC DNA]</scope>
    <scope>VARIANT PHE-39</scope>
</reference>
<reference key="8">
    <citation type="journal article" date="2004" name="Genome Res.">
        <title>The status, quality, and expansion of the NIH full-length cDNA project: the Mammalian Gene Collection (MGC).</title>
        <authorList>
            <consortium name="The MGC Project Team"/>
        </authorList>
    </citation>
    <scope>NUCLEOTIDE SEQUENCE [LARGE SCALE MRNA]</scope>
    <scope>VARIANT PHE-39</scope>
</reference>
<reference key="9">
    <citation type="journal article" date="1999" name="Hepatology">
        <title>Transport of monoglucuronosyl and bisglucuronosyl bilirubin by recombinant human and rat multidrug resistance protein 2.</title>
        <authorList>
            <person name="Kamisako T."/>
            <person name="Leier I."/>
            <person name="Cui Y."/>
            <person name="Koenig J."/>
            <person name="Buchholz U."/>
            <person name="Hummel-Eisenbeiss J."/>
            <person name="Keppler D."/>
        </authorList>
    </citation>
    <scope>FUNCTION</scope>
    <scope>CATALYTIC ACTIVITY</scope>
    <scope>BIOPHYSICOCHEMICAL PROPERTIES</scope>
</reference>
<reference key="10">
    <citation type="journal article" date="1999" name="Mol. Pharmacol.">
        <title>Drug resistance and ATP-dependent conjugate transport mediated by the apical multidrug resistance protein, MRP2, permanently expressed in human and canine cells.</title>
        <authorList>
            <person name="Cui Y."/>
            <person name="Koenig J."/>
            <person name="Buchholz J.K."/>
            <person name="Spring H."/>
            <person name="Leier I."/>
            <person name="Keppler D."/>
        </authorList>
    </citation>
    <scope>CATALYTIC ACTIVITY</scope>
    <scope>FUNCTION</scope>
    <scope>SUBCELLULAR LOCATION</scope>
    <scope>BIOPHYSICOCHEMICAL PROPERTIES</scope>
</reference>
<reference key="11">
    <citation type="journal article" date="2001" name="J. Biol. Chem.">
        <title>Mutation of Trp1254 in the multispecific organic anion transporter, multidrug resistance protein 2 (MRP2) (ABCC2), alters substrate specificity and results in loss of methotrexate transport activity.</title>
        <authorList>
            <person name="Ito K."/>
            <person name="Oleschuk C.J."/>
            <person name="Westlake C."/>
            <person name="Vasa M.Z."/>
            <person name="Deeley R.G."/>
            <person name="Cole S.P.C."/>
        </authorList>
    </citation>
    <scope>MUTAGENESIS OF TRP-1254</scope>
    <scope>FUNCTION</scope>
    <scope>CATALYTIC ACTIVITY</scope>
</reference>
<reference key="12">
    <citation type="journal article" date="2002" name="AIDS">
        <title>Multidrug resistance protein 2 (MRP2) transports HIV protease inhibitors, and transport can be enhanced by other drugs.</title>
        <authorList>
            <person name="Huisman M.T."/>
            <person name="Smit J.W."/>
            <person name="Crommentuyn K.M."/>
            <person name="Zelcer N."/>
            <person name="Wiltshire H.R."/>
            <person name="Beijnen J.H."/>
            <person name="Schinkel A.H."/>
        </authorList>
    </citation>
    <scope>FUNCTION</scope>
    <scope>CATALYTIC ACTIVITY</scope>
</reference>
<reference key="13">
    <citation type="journal article" date="2005" name="Biochim. Biophys. Acta">
        <title>Transport by vesicles of glycine- and taurine-conjugated bile salts and taurolithocholate 3-sulfate: a comparison of human BSEP with rat Bsep.</title>
        <authorList>
            <person name="Hayashi H."/>
            <person name="Takada T."/>
            <person name="Suzuki H."/>
            <person name="Onuki R."/>
            <person name="Hofmann A.F."/>
            <person name="Sugiyama Y."/>
        </authorList>
    </citation>
    <scope>CATALYTIC ACTIVITY</scope>
    <scope>FUNCTION</scope>
    <scope>BIOPHYSICOCHEMICAL PROPERTIES</scope>
</reference>
<reference key="14">
    <citation type="journal article" date="2008" name="Mol. Cell">
        <title>Kinase-selective enrichment enables quantitative phosphoproteomics of the kinome across the cell cycle.</title>
        <authorList>
            <person name="Daub H."/>
            <person name="Olsen J.V."/>
            <person name="Bairlein M."/>
            <person name="Gnad F."/>
            <person name="Oppermann F.S."/>
            <person name="Korner R."/>
            <person name="Greff Z."/>
            <person name="Keri G."/>
            <person name="Stemmann O."/>
            <person name="Mann M."/>
        </authorList>
    </citation>
    <scope>IDENTIFICATION BY MASS SPECTROMETRY [LARGE SCALE ANALYSIS]</scope>
    <source>
        <tissue>Cervix carcinoma</tissue>
    </source>
</reference>
<reference key="15">
    <citation type="journal article" date="2008" name="Proc. Natl. Acad. Sci. U.S.A.">
        <title>A quantitative atlas of mitotic phosphorylation.</title>
        <authorList>
            <person name="Dephoure N."/>
            <person name="Zhou C."/>
            <person name="Villen J."/>
            <person name="Beausoleil S.A."/>
            <person name="Bakalarski C.E."/>
            <person name="Elledge S.J."/>
            <person name="Gygi S.P."/>
        </authorList>
    </citation>
    <scope>PHOSPHORYLATION [LARGE SCALE ANALYSIS] AT SER-283 AND SER-878</scope>
    <scope>IDENTIFICATION BY MASS SPECTROMETRY [LARGE SCALE ANALYSIS]</scope>
    <source>
        <tissue>Cervix carcinoma</tissue>
    </source>
</reference>
<reference key="16">
    <citation type="journal article" date="2010" name="Sci. Signal.">
        <title>Quantitative phosphoproteomics reveals widespread full phosphorylation site occupancy during mitosis.</title>
        <authorList>
            <person name="Olsen J.V."/>
            <person name="Vermeulen M."/>
            <person name="Santamaria A."/>
            <person name="Kumar C."/>
            <person name="Miller M.L."/>
            <person name="Jensen L.J."/>
            <person name="Gnad F."/>
            <person name="Cox J."/>
            <person name="Jensen T.S."/>
            <person name="Nigg E.A."/>
            <person name="Brunak S."/>
            <person name="Mann M."/>
        </authorList>
    </citation>
    <scope>IDENTIFICATION BY MASS SPECTROMETRY [LARGE SCALE ANALYSIS]</scope>
    <source>
        <tissue>Cervix carcinoma</tissue>
    </source>
</reference>
<reference key="17">
    <citation type="journal article" date="2011" name="BMC Syst. Biol.">
        <title>Initial characterization of the human central proteome.</title>
        <authorList>
            <person name="Burkard T.R."/>
            <person name="Planyavsky M."/>
            <person name="Kaupe I."/>
            <person name="Breitwieser F.P."/>
            <person name="Buerckstuemmer T."/>
            <person name="Bennett K.L."/>
            <person name="Superti-Furga G."/>
            <person name="Colinge J."/>
        </authorList>
    </citation>
    <scope>IDENTIFICATION BY MASS SPECTROMETRY [LARGE SCALE ANALYSIS]</scope>
</reference>
<reference key="18">
    <citation type="journal article" date="2013" name="J. Proteome Res.">
        <title>Toward a comprehensive characterization of a human cancer cell phosphoproteome.</title>
        <authorList>
            <person name="Zhou H."/>
            <person name="Di Palma S."/>
            <person name="Preisinger C."/>
            <person name="Peng M."/>
            <person name="Polat A.N."/>
            <person name="Heck A.J."/>
            <person name="Mohammed S."/>
        </authorList>
    </citation>
    <scope>PHOSPHORYLATION [LARGE SCALE ANALYSIS] AT SER-926; SER-930 AND SER-938</scope>
    <scope>IDENTIFICATION BY MASS SPECTROMETRY [LARGE SCALE ANALYSIS]</scope>
    <source>
        <tissue>Cervix carcinoma</tissue>
    </source>
</reference>
<reference key="19">
    <citation type="journal article" date="2014" name="J. Proteomics">
        <title>An enzyme assisted RP-RPLC approach for in-depth analysis of human liver phosphoproteome.</title>
        <authorList>
            <person name="Bian Y."/>
            <person name="Song C."/>
            <person name="Cheng K."/>
            <person name="Dong M."/>
            <person name="Wang F."/>
            <person name="Huang J."/>
            <person name="Sun D."/>
            <person name="Wang L."/>
            <person name="Ye M."/>
            <person name="Zou H."/>
        </authorList>
    </citation>
    <scope>PHOSPHORYLATION [LARGE SCALE ANALYSIS] AT SER-878 AND SER-1438</scope>
    <scope>IDENTIFICATION BY MASS SPECTROMETRY [LARGE SCALE ANALYSIS]</scope>
    <source>
        <tissue>Liver</tissue>
    </source>
</reference>
<reference key="20">
    <citation type="journal article" date="2017" name="J. Pharm. Sci.">
        <title>The Organic Anion-Transporting Peptide 2B1 Is Localized in the Basolateral Membrane of the Human Jejunum and Caco-2 Monolayers.</title>
        <authorList>
            <person name="Keiser M."/>
            <person name="Kaltheuner L."/>
            <person name="Wildberg C."/>
            <person name="Mueller J."/>
            <person name="Grube M."/>
            <person name="Partecke L.I."/>
            <person name="Heidecke C.D."/>
            <person name="Oswald S."/>
        </authorList>
    </citation>
    <scope>SUBCELLULAR LOCATION</scope>
    <scope>TISSUE SPECIFICITY</scope>
</reference>
<reference key="21">
    <citation type="journal article" date="1998" name="Hum. Mol. Genet.">
        <title>Mutations in the canalicular multispecific organic anion transporter (cMOAT) gene, a novel ABC transporter, in patients with hyperbilirubinemia II/Dubin-Johnson syndrome.</title>
        <authorList>
            <person name="Wada M."/>
            <person name="Toh S."/>
            <person name="Taniguchi K."/>
            <person name="Nakamura T."/>
            <person name="Uchiumi T."/>
            <person name="Kohno K."/>
            <person name="Yoshida I."/>
            <person name="Kimura A."/>
            <person name="Sakisaka S."/>
            <person name="Adachi Y."/>
            <person name="Kuwano M."/>
        </authorList>
    </citation>
    <scope>VARIANT DJS TRP-768</scope>
</reference>
<reference key="22">
    <citation type="journal article" date="1999" name="Am. J. Hum. Genet.">
        <title>Genomic structure of the canalicular multispecific organic anion-transporter gene (MRP2/cMOAT) and mutations in the ATP-binding-cassette region in Dubin-Johnson syndrome.</title>
        <authorList>
            <person name="Toh S."/>
            <person name="Wada M."/>
            <person name="Uchiumi T."/>
            <person name="Inokuchi A."/>
            <person name="Makino Y."/>
            <person name="Horie Y."/>
            <person name="Adachi Y."/>
            <person name="Sakisaka S."/>
            <person name="Kuwano M."/>
        </authorList>
    </citation>
    <scope>VARIANTS DJS TRP-768 AND ARG-1382</scope>
</reference>
<reference key="23">
    <citation type="journal article" date="2000" name="Hepatology">
        <title>Impaired protein maturation of the conjugate export pump multidrug resistance protein 2 as a consequence of a deletion mutation in Dubin-Johnson syndrome.</title>
        <authorList>
            <person name="Keitel V."/>
            <person name="Kartenbeck J."/>
            <person name="Nies A.T."/>
            <person name="Spring H."/>
            <person name="Brom M."/>
            <person name="Keppler D."/>
        </authorList>
    </citation>
    <scope>CHARACTERIZATION OF VARIANT DJS 1392-ARG-MET-1393 DEL</scope>
    <scope>SUBCELLULAR LOCATION</scope>
</reference>
<reference key="24">
    <citation type="journal article" date="2001" name="J. Biol. Chem.">
        <title>Identification and functional analysis of two novel mutations in the multidrug resistance protein 2 gene in Israeli patients with Dubin-Johnson syndrome.</title>
        <authorList>
            <person name="Mor-Cohen R."/>
            <person name="Zivelin A."/>
            <person name="Rosenberg N."/>
            <person name="Shani M."/>
            <person name="Muallem S."/>
            <person name="Seligsohn U."/>
        </authorList>
    </citation>
    <scope>VARIANTS DJS HIS-1150 AND PHE-1173</scope>
    <scope>VARIANTS ASN-281 AND ILE-417</scope>
</reference>
<reference key="25">
    <citation type="journal article" date="2001" name="Pharmacogenetics">
        <title>Polymorphism of the ABC transporter genes, MDR1, MRP1 and MRP2/cMOAT, in healthy Japanese subjects.</title>
        <authorList>
            <person name="Ito S."/>
            <person name="Ieiri I."/>
            <person name="Tanabe M."/>
            <person name="Suzuki A."/>
            <person name="Higuchi S."/>
            <person name="Otsubo K."/>
        </authorList>
    </citation>
    <scope>VARIANT DJS TRP-768</scope>
    <scope>VARIANTS ILE-417; PHE-789 AND THR-1450</scope>
</reference>
<reference key="26">
    <citation type="journal article" date="2012" name="Hum. Mutat.">
        <title>Functional characterization of protein variants of the human multidrug transporter ABCC2 by a novel targeted expression system in fibrosarcoma cells.</title>
        <authorList>
            <person name="Arlanov R."/>
            <person name="Porter A."/>
            <person name="Strand D."/>
            <person name="Brough R."/>
            <person name="Karpova D."/>
            <person name="Kerb R."/>
            <person name="Wojnowski L."/>
            <person name="Schwab M."/>
            <person name="Lang T."/>
        </authorList>
    </citation>
    <scope>VARIANTS PHE-39; GLY-333; HIS-353; ILE-486; THR-670; SER-921; THR-1036; HIS-1174; LEU-1181; GLU-1188; LEU-1291 AND TYR-1515</scope>
    <scope>CHARACTERIZATION OF VARIANTS DJS PHE-1173</scope>
    <scope>CHARACTERIZATION OF VARIANTS GLY-333; HIS-353; ILE-486; SER-921; THR-1036; HIS-1174; LEU-1181; LYS-1244 AND LEU-1291</scope>
</reference>
<reference key="27">
    <citation type="journal article" date="2014" name="Pediatr. Int.">
        <title>Neonatal Dubin-Johnson syndrome: novel compound heterozygous mutation in the ABCC2 gene.</title>
        <authorList>
            <person name="Okada H."/>
            <person name="Kusaka T."/>
            <person name="Fuke N."/>
            <person name="Kunikata J."/>
            <person name="Kondo S."/>
            <person name="Iwase T."/>
            <person name="Nan W."/>
            <person name="Hirota T."/>
            <person name="Ieiri I."/>
            <person name="Itoh S."/>
        </authorList>
    </citation>
    <scope>VARIANT DJS TRP-768</scope>
    <scope>VARIANT ILE-417</scope>
</reference>
<sequence>MLEKFCNSTFWNSSFLDSPEADLPLCFEQTVLVWIPLGYLWLLAPWQLLHVYKSRTKRSSTTKLYLAKQVFVGFLLILAAIELALVLTEDSGQATVPAVRYTNPSLYLGTWLLVLLIQYSRQWCVQKNSWFLSLFWILSILCGTFQFQTLIRTLLQGDNSNLAYSCLFFISYGFQILILIFSAFSENNESSNNPSSIASFLSSITYSWYDSIILKGYKRPLTLEDVWEVDEEMKTKTLVSKFETHMKRELQKARRALQRRQEKSSQQNSGARLPGLNKNQSQSQDALVLEDVEKKKKKSGTKKDVPKSWLMKALFKTFYMVLLKSFLLKLVNDIFTFVSPQLLKLLISFASDRDTYLWIGYLCAILLFTAALIQSFCLQCYFQLCFKLGVKVRTAIMASVYKKALTLSNLARKEYTVGETVNLMSVDAQKLMDVTNFMHMLWSSVLQIVLSIFFLWRELGPSVLAGVGVMVLVIPINAILSTKSKTIQVKNMKNKDKRLKIMNEILSGIKILKYFAWEPSFRDQVQNLRKKELKNLLAFSQLQCVVIFVFQLTPVLVSVVTFSVYVLVDSNNILDAQKAFTSITLFNILRFPLSMLPMMISSMLQASVSTERLEKYLGGDDLDTSAIRHDCNFDKAMQFSEASFTWEHDSEATVRDVNLDIMAGQLVAVIGPVGSGKSSLISAMLGEMENVHGHITIKGTTAYVPQQSWIQNGTIKDNILFGTEFNEKRYQQVLEACALLPDLEMLPGGDLAEIGEKGINLSGGQKQRISLARATYQNLDIYLLDDPLSAVDAHVGKHIFNKVLGPNGLLKGKTRLLVTHSMHFLPQVDEIVVLGNGTIVEKGSYSALLAKKGEFAKNLKTFLRHTGPEEEATVHDGSEEEDDDYGLISSVEEIPEDAASITMRRENSFRRTLSRSSRSNGRHLKSLRNSLKTRNVNSLKEDEELVKGQKLIKKEFIETGKVKFSIYLEYLQAIGLFSIFFIILAFVMNSVAFIGSNLWLSAWTSDSKIFNSTDYPASQRDMRVGVYGALGLAQGIFVFIAHFWSAFGFVHASNILHKQLLNNILRAPMRFFDTTPTGRIVNRFAGDISTVDDTLPQSLRSWITCFLGIISTLVMICMATPVFTIIVIPLGIIYVSVQMFYVSTSRQLRRLDSVTRSPIYSHFSETVSGLPVIRAFEHQQRFLKHNEVRIDTNQKCVFSWITSNRWLAIRLELVGNLTVFFSALMMVIYRDTLSGDTVGFVLSNALNITQTLNWLVRMTSEIETNIVAVERITEYTKVENEAPWVTDKRPPPDWPSKGKIQFNNYQVRYRPELDLVLRGITCDIGSMEKIGVVGRTGAGKSSLTNCLFRILEAAGGQIIIDGVDIASIGLHDLREKLTIIPQDPILFSGSLRMNLDPFNNYSDEEIWKALELAHLKSFVASLQLGLSHEVTEAGGNLSIGQRQLLCLGRALLRKSKILVLDEATAAVDLETDNLIQTTIQNEFAHCTVITIAHRLHTIMDSDKVMVLDNGKIIECGSPEELLQIPGPFYFMAKEAGIENVNSTKF</sequence>
<protein>
    <recommendedName>
        <fullName>ATP-binding cassette sub-family C member 2</fullName>
        <ecNumber evidence="9 17">7.6.2.-</ecNumber>
        <ecNumber evidence="8 14 15">7.6.2.2</ecNumber>
        <ecNumber evidence="8 14">7.6.2.3</ecNumber>
    </recommendedName>
    <alternativeName>
        <fullName>Canalicular multidrug resistance protein</fullName>
    </alternativeName>
    <alternativeName>
        <fullName evidence="27">Canalicular multispecific organic anion transporter 1</fullName>
    </alternativeName>
    <alternativeName>
        <fullName>Multidrug resistance-associated protein 2</fullName>
    </alternativeName>
</protein>
<proteinExistence type="evidence at protein level"/>
<feature type="chain" id="PRO_0000093356" description="ATP-binding cassette sub-family C member 2">
    <location>
        <begin position="1"/>
        <end position="1545"/>
    </location>
</feature>
<feature type="topological domain" description="Extracellular" evidence="1">
    <location>
        <begin position="1"/>
        <end position="27"/>
    </location>
</feature>
<feature type="transmembrane region" description="Helical; Name=1" evidence="5">
    <location>
        <begin position="28"/>
        <end position="48"/>
    </location>
</feature>
<feature type="topological domain" description="Cytoplasmic" evidence="1">
    <location>
        <begin position="49"/>
        <end position="68"/>
    </location>
</feature>
<feature type="transmembrane region" description="Helical; Name=2" evidence="5">
    <location>
        <begin position="69"/>
        <end position="89"/>
    </location>
</feature>
<feature type="topological domain" description="Extracellular" evidence="1">
    <location>
        <begin position="90"/>
        <end position="93"/>
    </location>
</feature>
<feature type="transmembrane region" description="Helical; Name=3" evidence="5">
    <location>
        <begin position="94"/>
        <end position="114"/>
    </location>
</feature>
<feature type="topological domain" description="Cytoplasmic" evidence="1">
    <location>
        <begin position="115"/>
        <end position="126"/>
    </location>
</feature>
<feature type="transmembrane region" description="Helical; Name=4" evidence="5">
    <location>
        <begin position="127"/>
        <end position="147"/>
    </location>
</feature>
<feature type="topological domain" description="Extracellular" evidence="1">
    <location>
        <begin position="148"/>
        <end position="165"/>
    </location>
</feature>
<feature type="transmembrane region" description="Helical; Name=5" evidence="5">
    <location>
        <begin position="166"/>
        <end position="186"/>
    </location>
</feature>
<feature type="topological domain" description="Cytoplasmic" evidence="1">
    <location>
        <begin position="187"/>
        <end position="313"/>
    </location>
</feature>
<feature type="transmembrane region" description="Helical; Name=6" evidence="5">
    <location>
        <begin position="314"/>
        <end position="334"/>
    </location>
</feature>
<feature type="topological domain" description="Extracellular" evidence="1">
    <location>
        <begin position="335"/>
        <end position="360"/>
    </location>
</feature>
<feature type="transmembrane region" description="Helical; Name=7" evidence="5">
    <location>
        <begin position="361"/>
        <end position="381"/>
    </location>
</feature>
<feature type="topological domain" description="Cytoplasmic" evidence="1">
    <location>
        <begin position="382"/>
        <end position="437"/>
    </location>
</feature>
<feature type="transmembrane region" description="Helical; Name=8" evidence="5">
    <location>
        <begin position="438"/>
        <end position="458"/>
    </location>
</feature>
<feature type="topological domain" description="Extracellular" evidence="1">
    <location>
        <begin position="459"/>
        <end position="461"/>
    </location>
</feature>
<feature type="transmembrane region" description="Helical; Name=9" evidence="5">
    <location>
        <begin position="462"/>
        <end position="482"/>
    </location>
</feature>
<feature type="topological domain" description="Cytoplasmic" evidence="1">
    <location>
        <begin position="483"/>
        <end position="544"/>
    </location>
</feature>
<feature type="transmembrane region" description="Helical; Name=10" evidence="5">
    <location>
        <begin position="545"/>
        <end position="565"/>
    </location>
</feature>
<feature type="topological domain" description="Extracellular" evidence="1">
    <location>
        <begin position="566"/>
        <end position="587"/>
    </location>
</feature>
<feature type="transmembrane region" description="Helical; Name=11" evidence="5">
    <location>
        <begin position="588"/>
        <end position="608"/>
    </location>
</feature>
<feature type="topological domain" description="Cytoplasmic" evidence="1">
    <location>
        <begin position="609"/>
        <end position="971"/>
    </location>
</feature>
<feature type="transmembrane region" description="Helical; Name=12" evidence="5">
    <location>
        <begin position="972"/>
        <end position="992"/>
    </location>
</feature>
<feature type="topological domain" description="Extracellular" evidence="1">
    <location>
        <begin position="993"/>
        <end position="1033"/>
    </location>
</feature>
<feature type="transmembrane region" description="Helical; Name=13" evidence="5">
    <location>
        <begin position="1034"/>
        <end position="1054"/>
    </location>
</feature>
<feature type="topological domain" description="Cytoplasmic" evidence="1">
    <location>
        <begin position="1055"/>
        <end position="1097"/>
    </location>
</feature>
<feature type="transmembrane region" description="Helical; Name=14" evidence="5">
    <location>
        <begin position="1098"/>
        <end position="1118"/>
    </location>
</feature>
<feature type="topological domain" description="Extracellular" evidence="1">
    <location>
        <position position="1119"/>
    </location>
</feature>
<feature type="transmembrane region" description="Helical; Name=15" evidence="5">
    <location>
        <begin position="1120"/>
        <end position="1140"/>
    </location>
</feature>
<feature type="topological domain" description="Cytoplasmic" evidence="1">
    <location>
        <begin position="1141"/>
        <end position="1211"/>
    </location>
</feature>
<feature type="transmembrane region" description="Helical; Name=16" evidence="5">
    <location>
        <begin position="1212"/>
        <end position="1232"/>
    </location>
</feature>
<feature type="topological domain" description="Extracellular" evidence="1">
    <location>
        <begin position="1233"/>
        <end position="1234"/>
    </location>
</feature>
<feature type="transmembrane region" description="Helical; Name=17" evidence="5">
    <location>
        <begin position="1235"/>
        <end position="1255"/>
    </location>
</feature>
<feature type="topological domain" description="Cytoplasmic" evidence="1">
    <location>
        <begin position="1256"/>
        <end position="1545"/>
    </location>
</feature>
<feature type="domain" description="ABC transmembrane type-1 1" evidence="5">
    <location>
        <begin position="322"/>
        <end position="605"/>
    </location>
</feature>
<feature type="domain" description="ABC transporter 1" evidence="4">
    <location>
        <begin position="637"/>
        <end position="861"/>
    </location>
</feature>
<feature type="domain" description="ABC transmembrane type-1 2" evidence="5">
    <location>
        <begin position="979"/>
        <end position="1264"/>
    </location>
</feature>
<feature type="domain" description="ABC transporter 2" evidence="4">
    <location>
        <begin position="1300"/>
        <end position="1534"/>
    </location>
</feature>
<feature type="region of interest" description="Disordered" evidence="6">
    <location>
        <begin position="253"/>
        <end position="284"/>
    </location>
</feature>
<feature type="binding site" evidence="4">
    <location>
        <begin position="671"/>
        <end position="678"/>
    </location>
    <ligand>
        <name>ATP</name>
        <dbReference type="ChEBI" id="CHEBI:30616"/>
        <label>1</label>
    </ligand>
</feature>
<feature type="binding site" evidence="4">
    <location>
        <begin position="1334"/>
        <end position="1341"/>
    </location>
    <ligand>
        <name>ATP</name>
        <dbReference type="ChEBI" id="CHEBI:30616"/>
        <label>2</label>
    </ligand>
</feature>
<feature type="modified residue" description="Phosphoserine" evidence="2">
    <location>
        <position position="281"/>
    </location>
</feature>
<feature type="modified residue" description="Phosphoserine" evidence="32">
    <location>
        <position position="283"/>
    </location>
</feature>
<feature type="modified residue" description="Phosphoserine" evidence="32 34">
    <location>
        <position position="878"/>
    </location>
</feature>
<feature type="modified residue" description="Phosphoserine" evidence="33">
    <location>
        <position position="926"/>
    </location>
</feature>
<feature type="modified residue" description="Phosphoserine" evidence="33">
    <location>
        <position position="930"/>
    </location>
</feature>
<feature type="modified residue" description="Phosphoserine" evidence="33">
    <location>
        <position position="938"/>
    </location>
</feature>
<feature type="modified residue" description="Phosphoserine" evidence="34">
    <location>
        <position position="1438"/>
    </location>
</feature>
<feature type="glycosylation site" description="N-linked (GlcNAc...) asparagine" evidence="3">
    <location>
        <position position="7"/>
    </location>
</feature>
<feature type="glycosylation site" description="N-linked (GlcNAc...) asparagine" evidence="3">
    <location>
        <position position="12"/>
    </location>
</feature>
<feature type="glycosylation site" description="N-linked (GlcNAc...) asparagine" evidence="3">
    <location>
        <position position="1011"/>
    </location>
</feature>
<feature type="sequence variant" id="VAR_047152" description="In dbSNP:rs927344." evidence="10 16 18 21 22 24 25">
    <original>Y</original>
    <variation>F</variation>
    <location>
        <position position="39"/>
    </location>
</feature>
<feature type="sequence variant" id="VAR_029113" description="In dbSNP:rs17222744.">
    <original>M</original>
    <variation>L</variation>
    <location>
        <position position="246"/>
    </location>
</feature>
<feature type="sequence variant" id="VAR_013324" description="In dbSNP:rs56131651." evidence="13">
    <original>S</original>
    <variation>N</variation>
    <location>
        <position position="281"/>
    </location>
</feature>
<feature type="sequence variant" id="VAR_020226" description="Decreased expression; altered subcellular localization; altered transporter activity; dbSNP:rs17222674." evidence="18">
    <original>D</original>
    <variation>G</variation>
    <location>
        <position position="333"/>
    </location>
</feature>
<feature type="sequence variant" id="VAR_020227" description="Altered transporter activity; dbSNP:rs7080681." evidence="18">
    <original>R</original>
    <variation>H</variation>
    <location>
        <position position="353"/>
    </location>
</feature>
<feature type="sequence variant" id="VAR_013325" description="In dbSNP:rs2273697." evidence="12 13 19">
    <original>V</original>
    <variation>I</variation>
    <location>
        <position position="417"/>
    </location>
</feature>
<feature type="sequence variant" id="VAR_070607" description="Altered transporter activity; dbSNP:rs17222589." evidence="18">
    <original>T</original>
    <variation>I</variation>
    <location>
        <position position="486"/>
    </location>
</feature>
<feature type="sequence variant" id="VAR_029115" description="In dbSNP:rs17222561.">
    <original>K</original>
    <variation>E</variation>
    <location>
        <position position="495"/>
    </location>
</feature>
<feature type="sequence variant" id="VAR_029116" description="In dbSNP:rs17216233.">
    <original>F</original>
    <variation>L</variation>
    <location>
        <position position="562"/>
    </location>
</feature>
<feature type="sequence variant" id="VAR_020228" description="In dbSNP:rs17222632." evidence="18">
    <original>I</original>
    <variation>T</variation>
    <location>
        <position position="670"/>
    </location>
</feature>
<feature type="sequence variant" id="VAR_000099" description="In DJS; dbSNP:rs56199535." evidence="7 12 19 23">
    <original>R</original>
    <variation>W</variation>
    <location>
        <position position="768"/>
    </location>
</feature>
<feature type="sequence variant" id="VAR_013326" description="In dbSNP:rs56220353." evidence="12">
    <original>S</original>
    <variation>F</variation>
    <location>
        <position position="789"/>
    </location>
</feature>
<feature type="sequence variant" id="VAR_020229" description="In dbSNP:rs17222617.">
    <original>L</original>
    <variation>R</variation>
    <location>
        <position position="849"/>
    </location>
</feature>
<feature type="sequence variant" id="VAR_070608" description="Altered transporter activity; dbSNP:rs41318029." evidence="18">
    <original>G</original>
    <variation>S</variation>
    <location>
        <position position="921"/>
    </location>
</feature>
<feature type="sequence variant" id="VAR_029117" description="In dbSNP:rs17222554.">
    <original>I</original>
    <variation>V</variation>
    <location>
        <position position="982"/>
    </location>
</feature>
<feature type="sequence variant" id="VAR_020230" description="No effect on transporter activity; dbSNP:rs45441199." evidence="18">
    <original>I</original>
    <variation>T</variation>
    <location>
        <position position="1036"/>
    </location>
</feature>
<feature type="sequence variant" id="VAR_029118" description="In dbSNP:rs17222540.">
    <original>N</original>
    <variation>S</variation>
    <location>
        <position position="1063"/>
    </location>
</feature>
<feature type="sequence variant" id="VAR_013327" description="In DJS; protein is properly localized at the plasma membrane, but transporter activity is impaired; dbSNP:rs72558200." evidence="13">
    <original>R</original>
    <variation>H</variation>
    <location>
        <position position="1150"/>
    </location>
</feature>
<feature type="sequence variant" id="VAR_013328" description="In DJS; decreased expression and mislocation to the endoplasmic reticulum; dbSNP:rs72558201." evidence="13 18">
    <original>I</original>
    <variation>F</variation>
    <location>
        <position position="1173"/>
    </location>
</feature>
<feature type="sequence variant" id="VAR_070609" description="Decreased expression; altered subcellular localization; decreased transporter activity; dbSNP:rs139188247." evidence="18">
    <original>R</original>
    <variation>H</variation>
    <location>
        <position position="1174"/>
    </location>
</feature>
<feature type="sequence variant" id="VAR_020231" description="Decreased expression; dbSNP:rs8187692." evidence="18">
    <original>R</original>
    <variation>L</variation>
    <location>
        <position position="1181"/>
    </location>
</feature>
<feature type="sequence variant" id="VAR_020232" description="In dbSNP:rs17222723." evidence="18 24">
    <original>V</original>
    <variation>E</variation>
    <location>
        <position position="1188"/>
    </location>
</feature>
<feature type="sequence variant" id="VAR_070610" description="Decreased transporter activity; dbSNP:rs757141905." evidence="18">
    <original>N</original>
    <variation>K</variation>
    <location>
        <position position="1244"/>
    </location>
</feature>
<feature type="sequence variant" id="VAR_024360" description="In dbSNP:rs8187699.">
    <original>T</original>
    <variation>A</variation>
    <location>
        <position position="1273"/>
    </location>
</feature>
<feature type="sequence variant" id="VAR_020233" description="Altered transporter activity; dbSNP:rs17216317." evidence="18">
    <original>P</original>
    <variation>L</variation>
    <location>
        <position position="1291"/>
    </location>
</feature>
<feature type="sequence variant" id="VAR_010756" description="In DJS; dbSNP:rs72558202." evidence="7">
    <original>Q</original>
    <variation>R</variation>
    <location>
        <position position="1382"/>
    </location>
</feature>
<feature type="sequence variant" id="VAR_013329" description="In DJS; impaired transport from the endoplasmic reticulum to the apical plasma membrane associated with impaired maturation." evidence="10 11">
    <location>
        <begin position="1392"/>
        <end position="1393"/>
    </location>
</feature>
<feature type="sequence variant" id="VAR_013330" description="In dbSNP:rs56296335." evidence="12">
    <original>A</original>
    <variation>T</variation>
    <location>
        <position position="1450"/>
    </location>
</feature>
<feature type="sequence variant" id="VAR_020234" description="In dbSNP:rs8187710." evidence="18 24">
    <original>C</original>
    <variation>Y</variation>
    <location>
        <position position="1515"/>
    </location>
</feature>
<feature type="mutagenesis site" description="Fails to transport methotrexate, leukotriene C4 and estradiol glucuronide." evidence="14">
    <original>W</original>
    <variation>A</variation>
    <variation>C</variation>
    <location>
        <position position="1254"/>
    </location>
</feature>
<feature type="mutagenesis site" description="Fails to transport methotrexate and leukotriene C4. Does not affect estradiol glucuronide transport." evidence="14">
    <original>W</original>
    <variation>F</variation>
    <location>
        <position position="1254"/>
    </location>
</feature>
<feature type="mutagenesis site" description="Fails to transport methotrexate; reduces leukotriene C4 transport. Does not affect estradiol glucuronide transport." evidence="14">
    <original>W</original>
    <variation>Y</variation>
    <location>
        <position position="1254"/>
    </location>
</feature>
<feature type="sequence conflict" description="In Ref. 5; CAB45309." evidence="27" ref="5">
    <original>V</original>
    <variation>G</variation>
    <location>
        <position position="1430"/>
    </location>
</feature>
<feature type="helix" evidence="38">
    <location>
        <begin position="2"/>
        <end position="5"/>
    </location>
</feature>
<feature type="strand" evidence="37">
    <location>
        <begin position="6"/>
        <end position="8"/>
    </location>
</feature>
<feature type="helix" evidence="38">
    <location>
        <begin position="13"/>
        <end position="15"/>
    </location>
</feature>
<feature type="strand" evidence="35">
    <location>
        <begin position="17"/>
        <end position="20"/>
    </location>
</feature>
<feature type="helix" evidence="38">
    <location>
        <begin position="25"/>
        <end position="52"/>
    </location>
</feature>
<feature type="helix" evidence="38">
    <location>
        <begin position="63"/>
        <end position="89"/>
    </location>
</feature>
<feature type="turn" evidence="38">
    <location>
        <begin position="90"/>
        <end position="93"/>
    </location>
</feature>
<feature type="helix" evidence="38">
    <location>
        <begin position="99"/>
        <end position="120"/>
    </location>
</feature>
<feature type="helix" evidence="38">
    <location>
        <begin position="121"/>
        <end position="123"/>
    </location>
</feature>
<feature type="strand" evidence="38">
    <location>
        <begin position="124"/>
        <end position="128"/>
    </location>
</feature>
<feature type="helix" evidence="38">
    <location>
        <begin position="130"/>
        <end position="155"/>
    </location>
</feature>
<feature type="helix" evidence="38">
    <location>
        <begin position="162"/>
        <end position="181"/>
    </location>
</feature>
<feature type="strand" evidence="36">
    <location>
        <begin position="191"/>
        <end position="193"/>
    </location>
</feature>
<feature type="helix" evidence="38">
    <location>
        <begin position="194"/>
        <end position="196"/>
    </location>
</feature>
<feature type="helix" evidence="38">
    <location>
        <begin position="200"/>
        <end position="204"/>
    </location>
</feature>
<feature type="turn" evidence="38">
    <location>
        <begin position="205"/>
        <end position="208"/>
    </location>
</feature>
<feature type="helix" evidence="38">
    <location>
        <begin position="210"/>
        <end position="218"/>
    </location>
</feature>
<feature type="turn" evidence="38">
    <location>
        <begin position="223"/>
        <end position="225"/>
    </location>
</feature>
<feature type="helix" evidence="38">
    <location>
        <begin position="231"/>
        <end position="233"/>
    </location>
</feature>
<feature type="helix" evidence="38">
    <location>
        <begin position="235"/>
        <end position="259"/>
    </location>
</feature>
<feature type="helix" evidence="38">
    <location>
        <begin position="310"/>
        <end position="335"/>
    </location>
</feature>
<feature type="turn" evidence="38">
    <location>
        <begin position="336"/>
        <end position="338"/>
    </location>
</feature>
<feature type="helix" evidence="38">
    <location>
        <begin position="339"/>
        <end position="351"/>
    </location>
</feature>
<feature type="strand" evidence="36">
    <location>
        <begin position="353"/>
        <end position="355"/>
    </location>
</feature>
<feature type="helix" evidence="38">
    <location>
        <begin position="357"/>
        <end position="404"/>
    </location>
</feature>
<feature type="helix" evidence="38">
    <location>
        <begin position="409"/>
        <end position="412"/>
    </location>
</feature>
<feature type="helix" evidence="38">
    <location>
        <begin position="417"/>
        <end position="425"/>
    </location>
</feature>
<feature type="helix" evidence="38">
    <location>
        <begin position="427"/>
        <end position="435"/>
    </location>
</feature>
<feature type="turn" evidence="38">
    <location>
        <begin position="436"/>
        <end position="439"/>
    </location>
</feature>
<feature type="helix" evidence="38">
    <location>
        <begin position="440"/>
        <end position="459"/>
    </location>
</feature>
<feature type="helix" evidence="38">
    <location>
        <begin position="460"/>
        <end position="463"/>
    </location>
</feature>
<feature type="helix" evidence="38">
    <location>
        <begin position="464"/>
        <end position="507"/>
    </location>
</feature>
<feature type="helix" evidence="38">
    <location>
        <begin position="509"/>
        <end position="514"/>
    </location>
</feature>
<feature type="helix" evidence="38">
    <location>
        <begin position="518"/>
        <end position="568"/>
    </location>
</feature>
<feature type="helix" evidence="38">
    <location>
        <begin position="576"/>
        <end position="617"/>
    </location>
</feature>
<feature type="strand" evidence="35">
    <location>
        <begin position="625"/>
        <end position="631"/>
    </location>
</feature>
<feature type="strand" evidence="38">
    <location>
        <begin position="634"/>
        <end position="647"/>
    </location>
</feature>
<feature type="strand" evidence="38">
    <location>
        <begin position="653"/>
        <end position="657"/>
    </location>
</feature>
<feature type="strand" evidence="38">
    <location>
        <begin position="666"/>
        <end position="670"/>
    </location>
</feature>
<feature type="helix" evidence="38">
    <location>
        <begin position="677"/>
        <end position="684"/>
    </location>
</feature>
<feature type="strand" evidence="38">
    <location>
        <begin position="688"/>
        <end position="697"/>
    </location>
</feature>
<feature type="strand" evidence="38">
    <location>
        <begin position="701"/>
        <end position="704"/>
    </location>
</feature>
<feature type="strand" evidence="38">
    <location>
        <begin position="712"/>
        <end position="714"/>
    </location>
</feature>
<feature type="helix" evidence="38">
    <location>
        <begin position="715"/>
        <end position="720"/>
    </location>
</feature>
<feature type="helix" evidence="38">
    <location>
        <begin position="727"/>
        <end position="736"/>
    </location>
</feature>
<feature type="helix" evidence="38">
    <location>
        <begin position="740"/>
        <end position="743"/>
    </location>
</feature>
<feature type="strand" evidence="35">
    <location>
        <begin position="746"/>
        <end position="748"/>
    </location>
</feature>
<feature type="helix" evidence="38">
    <location>
        <begin position="749"/>
        <end position="751"/>
    </location>
</feature>
<feature type="strand" evidence="38">
    <location>
        <begin position="753"/>
        <end position="755"/>
    </location>
</feature>
<feature type="helix" evidence="36">
    <location>
        <begin position="756"/>
        <end position="758"/>
    </location>
</feature>
<feature type="helix" evidence="38">
    <location>
        <begin position="763"/>
        <end position="776"/>
    </location>
</feature>
<feature type="strand" evidence="38">
    <location>
        <begin position="780"/>
        <end position="785"/>
    </location>
</feature>
<feature type="helix" evidence="38">
    <location>
        <begin position="787"/>
        <end position="790"/>
    </location>
</feature>
<feature type="helix" evidence="38">
    <location>
        <begin position="793"/>
        <end position="802"/>
    </location>
</feature>
<feature type="strand" evidence="35">
    <location>
        <begin position="805"/>
        <end position="808"/>
    </location>
</feature>
<feature type="turn" evidence="38">
    <location>
        <begin position="809"/>
        <end position="812"/>
    </location>
</feature>
<feature type="strand" evidence="38">
    <location>
        <begin position="813"/>
        <end position="818"/>
    </location>
</feature>
<feature type="strand" evidence="36">
    <location>
        <begin position="822"/>
        <end position="824"/>
    </location>
</feature>
<feature type="helix" evidence="38">
    <location>
        <begin position="825"/>
        <end position="827"/>
    </location>
</feature>
<feature type="strand" evidence="38">
    <location>
        <begin position="829"/>
        <end position="835"/>
    </location>
</feature>
<feature type="strand" evidence="38">
    <location>
        <begin position="838"/>
        <end position="843"/>
    </location>
</feature>
<feature type="helix" evidence="38">
    <location>
        <begin position="845"/>
        <end position="851"/>
    </location>
</feature>
<feature type="helix" evidence="38">
    <location>
        <begin position="854"/>
        <end position="858"/>
    </location>
</feature>
<feature type="helix" evidence="38">
    <location>
        <begin position="859"/>
        <end position="862"/>
    </location>
</feature>
<feature type="strand" evidence="37">
    <location>
        <begin position="891"/>
        <end position="894"/>
    </location>
</feature>
<feature type="helix" evidence="37">
    <location>
        <begin position="895"/>
        <end position="897"/>
    </location>
</feature>
<feature type="helix" evidence="37">
    <location>
        <begin position="898"/>
        <end position="916"/>
    </location>
</feature>
<feature type="helix" evidence="37">
    <location>
        <begin position="927"/>
        <end position="934"/>
    </location>
</feature>
<feature type="helix" evidence="38">
    <location>
        <begin position="964"/>
        <end position="974"/>
    </location>
</feature>
<feature type="helix" evidence="38">
    <location>
        <begin position="976"/>
        <end position="1005"/>
    </location>
</feature>
<feature type="helix" evidence="38">
    <location>
        <begin position="1006"/>
        <end position="1008"/>
    </location>
</feature>
<feature type="turn" evidence="38">
    <location>
        <begin position="1012"/>
        <end position="1014"/>
    </location>
</feature>
<feature type="helix" evidence="38">
    <location>
        <begin position="1017"/>
        <end position="1064"/>
    </location>
</feature>
<feature type="helix" evidence="38">
    <location>
        <begin position="1069"/>
        <end position="1074"/>
    </location>
</feature>
<feature type="helix" evidence="38">
    <location>
        <begin position="1077"/>
        <end position="1092"/>
    </location>
</feature>
<feature type="helix" evidence="38">
    <location>
        <begin position="1094"/>
        <end position="1119"/>
    </location>
</feature>
<feature type="helix" evidence="38">
    <location>
        <begin position="1121"/>
        <end position="1123"/>
    </location>
</feature>
<feature type="helix" evidence="38">
    <location>
        <begin position="1124"/>
        <end position="1168"/>
    </location>
</feature>
<feature type="helix" evidence="38">
    <location>
        <begin position="1170"/>
        <end position="1175"/>
    </location>
</feature>
<feature type="helix" evidence="38">
    <location>
        <begin position="1179"/>
        <end position="1228"/>
    </location>
</feature>
<feature type="helix" evidence="38">
    <location>
        <begin position="1230"/>
        <end position="1232"/>
    </location>
</feature>
<feature type="helix" evidence="38">
    <location>
        <begin position="1235"/>
        <end position="1245"/>
    </location>
</feature>
<feature type="helix" evidence="38">
    <location>
        <begin position="1248"/>
        <end position="1265"/>
    </location>
</feature>
<feature type="helix" evidence="38">
    <location>
        <begin position="1267"/>
        <end position="1276"/>
    </location>
</feature>
<feature type="strand" evidence="38">
    <location>
        <begin position="1300"/>
        <end position="1307"/>
    </location>
</feature>
<feature type="strand" evidence="38">
    <location>
        <begin position="1316"/>
        <end position="1323"/>
    </location>
</feature>
<feature type="strand" evidence="38">
    <location>
        <begin position="1329"/>
        <end position="1333"/>
    </location>
</feature>
<feature type="helix" evidence="38">
    <location>
        <begin position="1342"/>
        <end position="1347"/>
    </location>
</feature>
<feature type="strand" evidence="38">
    <location>
        <begin position="1354"/>
        <end position="1360"/>
    </location>
</feature>
<feature type="turn" evidence="38">
    <location>
        <begin position="1365"/>
        <end position="1367"/>
    </location>
</feature>
<feature type="helix" evidence="38">
    <location>
        <begin position="1370"/>
        <end position="1374"/>
    </location>
</feature>
<feature type="strand" evidence="38">
    <location>
        <begin position="1377"/>
        <end position="1380"/>
    </location>
</feature>
<feature type="strand" evidence="38">
    <location>
        <begin position="1388"/>
        <end position="1390"/>
    </location>
</feature>
<feature type="helix" evidence="38">
    <location>
        <begin position="1391"/>
        <end position="1395"/>
    </location>
</feature>
<feature type="helix" evidence="38">
    <location>
        <begin position="1403"/>
        <end position="1412"/>
    </location>
</feature>
<feature type="helix" evidence="38">
    <location>
        <begin position="1416"/>
        <end position="1419"/>
    </location>
</feature>
<feature type="strand" evidence="38">
    <location>
        <begin position="1422"/>
        <end position="1427"/>
    </location>
</feature>
<feature type="helix" evidence="38">
    <location>
        <begin position="1432"/>
        <end position="1434"/>
    </location>
</feature>
<feature type="strand" evidence="37">
    <location>
        <begin position="1435"/>
        <end position="1437"/>
    </location>
</feature>
<feature type="helix" evidence="38">
    <location>
        <begin position="1439"/>
        <end position="1453"/>
    </location>
</feature>
<feature type="strand" evidence="38">
    <location>
        <begin position="1456"/>
        <end position="1461"/>
    </location>
</feature>
<feature type="turn" evidence="36">
    <location>
        <begin position="1463"/>
        <end position="1466"/>
    </location>
</feature>
<feature type="helix" evidence="38">
    <location>
        <begin position="1469"/>
        <end position="1482"/>
    </location>
</feature>
<feature type="turn" evidence="36">
    <location>
        <begin position="1483"/>
        <end position="1485"/>
    </location>
</feature>
<feature type="strand" evidence="38">
    <location>
        <begin position="1486"/>
        <end position="1491"/>
    </location>
</feature>
<feature type="helix" evidence="38">
    <location>
        <begin position="1495"/>
        <end position="1497"/>
    </location>
</feature>
<feature type="turn" evidence="38">
    <location>
        <begin position="1498"/>
        <end position="1500"/>
    </location>
</feature>
<feature type="strand" evidence="38">
    <location>
        <begin position="1501"/>
        <end position="1516"/>
    </location>
</feature>
<feature type="helix" evidence="38">
    <location>
        <begin position="1520"/>
        <end position="1523"/>
    </location>
</feature>
<feature type="helix" evidence="38">
    <location>
        <begin position="1527"/>
        <end position="1534"/>
    </location>
</feature>
<name>MRP2_HUMAN</name>
<evidence type="ECO:0000250" key="1"/>
<evidence type="ECO:0000250" key="2">
    <source>
        <dbReference type="UniProtKB" id="Q63120"/>
    </source>
</evidence>
<evidence type="ECO:0000255" key="3"/>
<evidence type="ECO:0000255" key="4">
    <source>
        <dbReference type="PROSITE-ProRule" id="PRU00434"/>
    </source>
</evidence>
<evidence type="ECO:0000255" key="5">
    <source>
        <dbReference type="PROSITE-ProRule" id="PRU00441"/>
    </source>
</evidence>
<evidence type="ECO:0000256" key="6">
    <source>
        <dbReference type="SAM" id="MobiDB-lite"/>
    </source>
</evidence>
<evidence type="ECO:0000269" key="7">
    <source>
    </source>
</evidence>
<evidence type="ECO:0000269" key="8">
    <source>
    </source>
</evidence>
<evidence type="ECO:0000269" key="9">
    <source>
    </source>
</evidence>
<evidence type="ECO:0000269" key="10">
    <source>
    </source>
</evidence>
<evidence type="ECO:0000269" key="11">
    <source>
    </source>
</evidence>
<evidence type="ECO:0000269" key="12">
    <source>
    </source>
</evidence>
<evidence type="ECO:0000269" key="13">
    <source>
    </source>
</evidence>
<evidence type="ECO:0000269" key="14">
    <source>
    </source>
</evidence>
<evidence type="ECO:0000269" key="15">
    <source>
    </source>
</evidence>
<evidence type="ECO:0000269" key="16">
    <source>
    </source>
</evidence>
<evidence type="ECO:0000269" key="17">
    <source>
    </source>
</evidence>
<evidence type="ECO:0000269" key="18">
    <source>
    </source>
</evidence>
<evidence type="ECO:0000269" key="19">
    <source>
    </source>
</evidence>
<evidence type="ECO:0000269" key="20">
    <source>
    </source>
</evidence>
<evidence type="ECO:0000269" key="21">
    <source>
    </source>
</evidence>
<evidence type="ECO:0000269" key="22">
    <source>
    </source>
</evidence>
<evidence type="ECO:0000269" key="23">
    <source>
    </source>
</evidence>
<evidence type="ECO:0000269" key="24">
    <source ref="2"/>
</evidence>
<evidence type="ECO:0000269" key="25">
    <source ref="7"/>
</evidence>
<evidence type="ECO:0000303" key="26">
    <source>
    </source>
</evidence>
<evidence type="ECO:0000305" key="27"/>
<evidence type="ECO:0000305" key="28">
    <source>
    </source>
</evidence>
<evidence type="ECO:0000305" key="29">
    <source>
    </source>
</evidence>
<evidence type="ECO:0000305" key="30">
    <source>
    </source>
</evidence>
<evidence type="ECO:0000312" key="31">
    <source>
        <dbReference type="HGNC" id="HGNC:53"/>
    </source>
</evidence>
<evidence type="ECO:0007744" key="32">
    <source>
    </source>
</evidence>
<evidence type="ECO:0007744" key="33">
    <source>
    </source>
</evidence>
<evidence type="ECO:0007744" key="34">
    <source>
    </source>
</evidence>
<evidence type="ECO:0007829" key="35">
    <source>
        <dbReference type="PDB" id="8IZQ"/>
    </source>
</evidence>
<evidence type="ECO:0007829" key="36">
    <source>
        <dbReference type="PDB" id="8JXQ"/>
    </source>
</evidence>
<evidence type="ECO:0007829" key="37">
    <source>
        <dbReference type="PDB" id="9BR2"/>
    </source>
</evidence>
<evidence type="ECO:0007829" key="38">
    <source>
        <dbReference type="PDB" id="9C12"/>
    </source>
</evidence>
<keyword id="KW-0002">3D-structure</keyword>
<keyword id="KW-0067">ATP-binding</keyword>
<keyword id="KW-1003">Cell membrane</keyword>
<keyword id="KW-0225">Disease variant</keyword>
<keyword id="KW-0325">Glycoprotein</keyword>
<keyword id="KW-0445">Lipid transport</keyword>
<keyword id="KW-0472">Membrane</keyword>
<keyword id="KW-0547">Nucleotide-binding</keyword>
<keyword id="KW-0597">Phosphoprotein</keyword>
<keyword id="KW-1267">Proteomics identification</keyword>
<keyword id="KW-1185">Reference proteome</keyword>
<keyword id="KW-0677">Repeat</keyword>
<keyword id="KW-1278">Translocase</keyword>
<keyword id="KW-0812">Transmembrane</keyword>
<keyword id="KW-1133">Transmembrane helix</keyword>
<keyword id="KW-0813">Transport</keyword>